<accession>P00973</accession>
<accession>A8K4N8</accession>
<accession>F8VXY3</accession>
<accession>P04820</accession>
<accession>P29080</accession>
<accession>P29081</accession>
<accession>P78485</accession>
<accession>P78486</accession>
<accession>Q16700</accession>
<accession>Q16701</accession>
<accession>Q1PG42</accession>
<accession>Q3ZM01</accession>
<accession>Q53GC5</accession>
<accession>Q53YA4</accession>
<accession>Q6A1Z3</accession>
<accession>Q6IPC6</accession>
<accession>Q6P7N9</accession>
<accession>Q96J61</accession>
<sequence length="400" mass="46029">MMDLRNTPAKSLDKFIEDYLLPDTCFRMQINHAIDIICGFLKERCFRGSSYPVCVSKVVKGGSSGKGTTLRGRSDADLVVFLSPLTTFQDQLNRRGEFIQEIRRQLEACQRERAFSVKFEVQAPRWGNPRALSFVLSSLQLGEGVEFDVLPAFDALGQLTGGYKPNPQIYVKLIEECTDLQKEGEFSTCFTELQRDFLKQRPTKLKSLIRLVKHWYQNCKKKLGKLPPQYALELLTVYAWERGSMKTHFNTAQGFRTVLELVINYQQLCIYWTKYYDFKNPIIEKYLRRQLTKPRPVILDPADPTGNLGGGDPKGWRQLAQEAEAWLNYPCFKNWDGSPVSSWILLAESNSADDETDDPRRYQKYGYIGTHEYPHFSHRPSTLQAASTPQAEEDWTCTIL</sequence>
<name>OAS1_HUMAN</name>
<reference key="1">
    <citation type="journal article" date="1985" name="EMBO J.">
        <title>Structure of two forms of the interferon-induced (2'-5') oligo A synthetase of human cells based on cDNAs and gene sequences.</title>
        <authorList>
            <person name="Benech P."/>
            <person name="Mory Y."/>
            <person name="Revel M."/>
            <person name="Chebath J."/>
        </authorList>
    </citation>
    <scope>NUCLEOTIDE SEQUENCE [GENOMIC DNA / MRNA] (ISOFORMS P42 AND P46)</scope>
    <scope>VARIANTS ASP-31; SER-162; THR-352 AND THR-361</scope>
    <source>
        <tissue>Fetal blood</tissue>
    </source>
</reference>
<reference key="2">
    <citation type="journal article" date="1986" name="FEBS Lett.">
        <title>Full-length sequence and expression of the 42 kDa 2-5A synthetase induced by human interferon.</title>
        <authorList>
            <person name="Wathelet M.G."/>
            <person name="Moutschen S."/>
            <person name="Cravador A."/>
            <person name="Dewit L."/>
            <person name="Defilippi P."/>
            <person name="Huez G.A."/>
            <person name="Content J."/>
        </authorList>
    </citation>
    <scope>NUCLEOTIDE SEQUENCE [MRNA] (ISOFORM P42)</scope>
    <scope>CATALYTIC ACTIVITY</scope>
    <scope>SUBCELLULAR LOCATION</scope>
    <scope>VARIANT SER-162</scope>
</reference>
<reference key="3">
    <citation type="journal article" date="1986" name="J. Biochem.">
        <title>Structure and expression of a cloned cDNA for human (2'-5')oligoadenylate synthetase.</title>
        <authorList>
            <person name="Shiojiri S."/>
            <person name="Fukunaga R."/>
            <person name="Ichii Y."/>
            <person name="Sokawa Y."/>
        </authorList>
    </citation>
    <scope>NUCLEOTIDE SEQUENCE [MRNA] (ISOFORM P42)</scope>
    <scope>CATALYTIC ACTIVITY</scope>
    <scope>SUBCELLULAR LOCATION</scope>
    <scope>VARIANT SER-162</scope>
</reference>
<reference key="4">
    <citation type="journal article" date="1991" name="J. Biol. Chem.">
        <title>Cloning, sequencing, and expression of two murine 2'-5'-oligoadenylate synthetases. Structure-function relationships.</title>
        <authorList>
            <person name="Ghosh S.K."/>
            <person name="Kusari J."/>
            <person name="Bandyopadhyay S.K."/>
            <person name="Samanta H."/>
            <person name="Kumar R."/>
            <person name="Sen G.C."/>
        </authorList>
    </citation>
    <scope>NUCLEOTIDE SEQUENCE [GENOMIC DNA] (ISOFORMS P48 AND P42)</scope>
    <scope>VARIANT SER-162</scope>
</reference>
<reference key="5">
    <citation type="submission" date="2004-03" db="EMBL/GenBank/DDBJ databases">
        <title>OAS1p44, a splice variant of the interferon induced human 2'-5' oligoadenylate synthetase.</title>
        <authorList>
            <person name="Andersen J.B."/>
            <person name="Strandbygaard D.J."/>
            <person name="Larsen S.E."/>
            <person name="Justesen J."/>
        </authorList>
    </citation>
    <scope>NUCLEOTIDE SEQUENCE [MRNA] (ISOFORM P44)</scope>
</reference>
<reference key="6">
    <citation type="journal article" date="2006" name="J. Mol. Evol.">
        <title>The mammalian 2'-5' oligoadenylate synthetase gene family: evidence for concerted evolution of paralogous Oas1 genes in Rodentia and Artiodactyla.</title>
        <authorList>
            <person name="Perelygin A.A."/>
            <person name="Zharkikh A.A."/>
            <person name="Scherbik S.V."/>
            <person name="Brinton M.A."/>
        </authorList>
    </citation>
    <scope>NUCLEOTIDE SEQUENCE [MRNA] (ISOFORM P48)</scope>
    <scope>VARIANTS SER-162; THR-352 AND THR-361</scope>
</reference>
<reference key="7">
    <citation type="submission" date="2006-03" db="EMBL/GenBank/DDBJ databases">
        <title>Susceptibility to infection by West Nile Virus: OAS1 (OAS1 2'-5' oligoadenylate synthetase gene) stop codon detected in exon 1 of a normal individual heterozygous for the gene.</title>
        <authorList>
            <person name="Lee M.-K."/>
            <person name="Morshed M.G."/>
            <person name="Jorgensen D.R."/>
            <person name="Hasselback P."/>
            <person name="Goh S.-H."/>
        </authorList>
    </citation>
    <scope>NUCLEOTIDE SEQUENCE [GENOMIC DNA] (ISOFORM P46)</scope>
    <scope>VARIANTS THR-352 AND THR-361</scope>
</reference>
<reference key="8">
    <citation type="journal article" date="2004" name="Nat. Genet.">
        <title>Complete sequencing and characterization of 21,243 full-length human cDNAs.</title>
        <authorList>
            <person name="Ota T."/>
            <person name="Suzuki Y."/>
            <person name="Nishikawa T."/>
            <person name="Otsuki T."/>
            <person name="Sugiyama T."/>
            <person name="Irie R."/>
            <person name="Wakamatsu A."/>
            <person name="Hayashi K."/>
            <person name="Sato H."/>
            <person name="Nagai K."/>
            <person name="Kimura K."/>
            <person name="Makita H."/>
            <person name="Sekine M."/>
            <person name="Obayashi M."/>
            <person name="Nishi T."/>
            <person name="Shibahara T."/>
            <person name="Tanaka T."/>
            <person name="Ishii S."/>
            <person name="Yamamoto J."/>
            <person name="Saito K."/>
            <person name="Kawai Y."/>
            <person name="Isono Y."/>
            <person name="Nakamura Y."/>
            <person name="Nagahari K."/>
            <person name="Murakami K."/>
            <person name="Yasuda T."/>
            <person name="Iwayanagi T."/>
            <person name="Wagatsuma M."/>
            <person name="Shiratori A."/>
            <person name="Sudo H."/>
            <person name="Hosoiri T."/>
            <person name="Kaku Y."/>
            <person name="Kodaira H."/>
            <person name="Kondo H."/>
            <person name="Sugawara M."/>
            <person name="Takahashi M."/>
            <person name="Kanda K."/>
            <person name="Yokoi T."/>
            <person name="Furuya T."/>
            <person name="Kikkawa E."/>
            <person name="Omura Y."/>
            <person name="Abe K."/>
            <person name="Kamihara K."/>
            <person name="Katsuta N."/>
            <person name="Sato K."/>
            <person name="Tanikawa M."/>
            <person name="Yamazaki M."/>
            <person name="Ninomiya K."/>
            <person name="Ishibashi T."/>
            <person name="Yamashita H."/>
            <person name="Murakawa K."/>
            <person name="Fujimori K."/>
            <person name="Tanai H."/>
            <person name="Kimata M."/>
            <person name="Watanabe M."/>
            <person name="Hiraoka S."/>
            <person name="Chiba Y."/>
            <person name="Ishida S."/>
            <person name="Ono Y."/>
            <person name="Takiguchi S."/>
            <person name="Watanabe S."/>
            <person name="Yosida M."/>
            <person name="Hotuta T."/>
            <person name="Kusano J."/>
            <person name="Kanehori K."/>
            <person name="Takahashi-Fujii A."/>
            <person name="Hara H."/>
            <person name="Tanase T.-O."/>
            <person name="Nomura Y."/>
            <person name="Togiya S."/>
            <person name="Komai F."/>
            <person name="Hara R."/>
            <person name="Takeuchi K."/>
            <person name="Arita M."/>
            <person name="Imose N."/>
            <person name="Musashino K."/>
            <person name="Yuuki H."/>
            <person name="Oshima A."/>
            <person name="Sasaki N."/>
            <person name="Aotsuka S."/>
            <person name="Yoshikawa Y."/>
            <person name="Matsunawa H."/>
            <person name="Ichihara T."/>
            <person name="Shiohata N."/>
            <person name="Sano S."/>
            <person name="Moriya S."/>
            <person name="Momiyama H."/>
            <person name="Satoh N."/>
            <person name="Takami S."/>
            <person name="Terashima Y."/>
            <person name="Suzuki O."/>
            <person name="Nakagawa S."/>
            <person name="Senoh A."/>
            <person name="Mizoguchi H."/>
            <person name="Goto Y."/>
            <person name="Shimizu F."/>
            <person name="Wakebe H."/>
            <person name="Hishigaki H."/>
            <person name="Watanabe T."/>
            <person name="Sugiyama A."/>
            <person name="Takemoto M."/>
            <person name="Kawakami B."/>
            <person name="Yamazaki M."/>
            <person name="Watanabe K."/>
            <person name="Kumagai A."/>
            <person name="Itakura S."/>
            <person name="Fukuzumi Y."/>
            <person name="Fujimori Y."/>
            <person name="Komiyama M."/>
            <person name="Tashiro H."/>
            <person name="Tanigami A."/>
            <person name="Fujiwara T."/>
            <person name="Ono T."/>
            <person name="Yamada K."/>
            <person name="Fujii Y."/>
            <person name="Ozaki K."/>
            <person name="Hirao M."/>
            <person name="Ohmori Y."/>
            <person name="Kawabata A."/>
            <person name="Hikiji T."/>
            <person name="Kobatake N."/>
            <person name="Inagaki H."/>
            <person name="Ikema Y."/>
            <person name="Okamoto S."/>
            <person name="Okitani R."/>
            <person name="Kawakami T."/>
            <person name="Noguchi S."/>
            <person name="Itoh T."/>
            <person name="Shigeta K."/>
            <person name="Senba T."/>
            <person name="Matsumura K."/>
            <person name="Nakajima Y."/>
            <person name="Mizuno T."/>
            <person name="Morinaga M."/>
            <person name="Sasaki M."/>
            <person name="Togashi T."/>
            <person name="Oyama M."/>
            <person name="Hata H."/>
            <person name="Watanabe M."/>
            <person name="Komatsu T."/>
            <person name="Mizushima-Sugano J."/>
            <person name="Satoh T."/>
            <person name="Shirai Y."/>
            <person name="Takahashi Y."/>
            <person name="Nakagawa K."/>
            <person name="Okumura K."/>
            <person name="Nagase T."/>
            <person name="Nomura N."/>
            <person name="Kikuchi H."/>
            <person name="Masuho Y."/>
            <person name="Yamashita R."/>
            <person name="Nakai K."/>
            <person name="Yada T."/>
            <person name="Nakamura Y."/>
            <person name="Ohara O."/>
            <person name="Isogai T."/>
            <person name="Sugano S."/>
        </authorList>
    </citation>
    <scope>NUCLEOTIDE SEQUENCE [LARGE SCALE MRNA] (ISOFORM P42)</scope>
    <scope>VARIANT SER-162</scope>
</reference>
<reference key="9">
    <citation type="submission" date="2003-05" db="EMBL/GenBank/DDBJ databases">
        <title>Cloning of human full-length CDSs in BD Creator(TM) system donor vector.</title>
        <authorList>
            <person name="Kalnine N."/>
            <person name="Chen X."/>
            <person name="Rolfs A."/>
            <person name="Halleck A."/>
            <person name="Hines L."/>
            <person name="Eisenstein S."/>
            <person name="Koundinya M."/>
            <person name="Raphael J."/>
            <person name="Moreira D."/>
            <person name="Kelley T."/>
            <person name="LaBaer J."/>
            <person name="Lin Y."/>
            <person name="Phelan M."/>
            <person name="Farmer A."/>
        </authorList>
    </citation>
    <scope>NUCLEOTIDE SEQUENCE [LARGE SCALE MRNA] (ISOFORM P42)</scope>
    <scope>VARIANT SER-162</scope>
</reference>
<reference key="10">
    <citation type="submission" date="2005-04" db="EMBL/GenBank/DDBJ databases">
        <authorList>
            <person name="Suzuki Y."/>
            <person name="Sugano S."/>
            <person name="Totoki Y."/>
            <person name="Toyoda A."/>
            <person name="Takeda T."/>
            <person name="Sakaki Y."/>
            <person name="Tanaka A."/>
            <person name="Yokoyama S."/>
        </authorList>
    </citation>
    <scope>NUCLEOTIDE SEQUENCE [LARGE SCALE MRNA] (ISOFORM P42)</scope>
    <scope>VARIANT SER-162</scope>
    <source>
        <tissue>Small intestine</tissue>
    </source>
</reference>
<reference key="11">
    <citation type="journal article" date="2006" name="Nature">
        <title>The finished DNA sequence of human chromosome 12.</title>
        <authorList>
            <person name="Scherer S.E."/>
            <person name="Muzny D.M."/>
            <person name="Buhay C.J."/>
            <person name="Chen R."/>
            <person name="Cree A."/>
            <person name="Ding Y."/>
            <person name="Dugan-Rocha S."/>
            <person name="Gill R."/>
            <person name="Gunaratne P."/>
            <person name="Harris R.A."/>
            <person name="Hawes A.C."/>
            <person name="Hernandez J."/>
            <person name="Hodgson A.V."/>
            <person name="Hume J."/>
            <person name="Jackson A."/>
            <person name="Khan Z.M."/>
            <person name="Kovar-Smith C."/>
            <person name="Lewis L.R."/>
            <person name="Lozado R.J."/>
            <person name="Metzker M.L."/>
            <person name="Milosavljevic A."/>
            <person name="Miner G.R."/>
            <person name="Montgomery K.T."/>
            <person name="Morgan M.B."/>
            <person name="Nazareth L.V."/>
            <person name="Scott G."/>
            <person name="Sodergren E."/>
            <person name="Song X.-Z."/>
            <person name="Steffen D."/>
            <person name="Lovering R.C."/>
            <person name="Wheeler D.A."/>
            <person name="Worley K.C."/>
            <person name="Yuan Y."/>
            <person name="Zhang Z."/>
            <person name="Adams C.Q."/>
            <person name="Ansari-Lari M.A."/>
            <person name="Ayele M."/>
            <person name="Brown M.J."/>
            <person name="Chen G."/>
            <person name="Chen Z."/>
            <person name="Clerc-Blankenburg K.P."/>
            <person name="Davis C."/>
            <person name="Delgado O."/>
            <person name="Dinh H.H."/>
            <person name="Draper H."/>
            <person name="Gonzalez-Garay M.L."/>
            <person name="Havlak P."/>
            <person name="Jackson L.R."/>
            <person name="Jacob L.S."/>
            <person name="Kelly S.H."/>
            <person name="Li L."/>
            <person name="Li Z."/>
            <person name="Liu J."/>
            <person name="Liu W."/>
            <person name="Lu J."/>
            <person name="Maheshwari M."/>
            <person name="Nguyen B.-V."/>
            <person name="Okwuonu G.O."/>
            <person name="Pasternak S."/>
            <person name="Perez L.M."/>
            <person name="Plopper F.J.H."/>
            <person name="Santibanez J."/>
            <person name="Shen H."/>
            <person name="Tabor P.E."/>
            <person name="Verduzco D."/>
            <person name="Waldron L."/>
            <person name="Wang Q."/>
            <person name="Williams G.A."/>
            <person name="Zhang J."/>
            <person name="Zhou J."/>
            <person name="Allen C.C."/>
            <person name="Amin A.G."/>
            <person name="Anyalebechi V."/>
            <person name="Bailey M."/>
            <person name="Barbaria J.A."/>
            <person name="Bimage K.E."/>
            <person name="Bryant N.P."/>
            <person name="Burch P.E."/>
            <person name="Burkett C.E."/>
            <person name="Burrell K.L."/>
            <person name="Calderon E."/>
            <person name="Cardenas V."/>
            <person name="Carter K."/>
            <person name="Casias K."/>
            <person name="Cavazos I."/>
            <person name="Cavazos S.R."/>
            <person name="Ceasar H."/>
            <person name="Chacko J."/>
            <person name="Chan S.N."/>
            <person name="Chavez D."/>
            <person name="Christopoulos C."/>
            <person name="Chu J."/>
            <person name="Cockrell R."/>
            <person name="Cox C.D."/>
            <person name="Dang M."/>
            <person name="Dathorne S.R."/>
            <person name="David R."/>
            <person name="Davis C.M."/>
            <person name="Davy-Carroll L."/>
            <person name="Deshazo D.R."/>
            <person name="Donlin J.E."/>
            <person name="D'Souza L."/>
            <person name="Eaves K.A."/>
            <person name="Egan A."/>
            <person name="Emery-Cohen A.J."/>
            <person name="Escotto M."/>
            <person name="Flagg N."/>
            <person name="Forbes L.D."/>
            <person name="Gabisi A.M."/>
            <person name="Garza M."/>
            <person name="Hamilton C."/>
            <person name="Henderson N."/>
            <person name="Hernandez O."/>
            <person name="Hines S."/>
            <person name="Hogues M.E."/>
            <person name="Huang M."/>
            <person name="Idlebird D.G."/>
            <person name="Johnson R."/>
            <person name="Jolivet A."/>
            <person name="Jones S."/>
            <person name="Kagan R."/>
            <person name="King L.M."/>
            <person name="Leal B."/>
            <person name="Lebow H."/>
            <person name="Lee S."/>
            <person name="LeVan J.M."/>
            <person name="Lewis L.C."/>
            <person name="London P."/>
            <person name="Lorensuhewa L.M."/>
            <person name="Loulseged H."/>
            <person name="Lovett D.A."/>
            <person name="Lucier A."/>
            <person name="Lucier R.L."/>
            <person name="Ma J."/>
            <person name="Madu R.C."/>
            <person name="Mapua P."/>
            <person name="Martindale A.D."/>
            <person name="Martinez E."/>
            <person name="Massey E."/>
            <person name="Mawhiney S."/>
            <person name="Meador M.G."/>
            <person name="Mendez S."/>
            <person name="Mercado C."/>
            <person name="Mercado I.C."/>
            <person name="Merritt C.E."/>
            <person name="Miner Z.L."/>
            <person name="Minja E."/>
            <person name="Mitchell T."/>
            <person name="Mohabbat F."/>
            <person name="Mohabbat K."/>
            <person name="Montgomery B."/>
            <person name="Moore N."/>
            <person name="Morris S."/>
            <person name="Munidasa M."/>
            <person name="Ngo R.N."/>
            <person name="Nguyen N.B."/>
            <person name="Nickerson E."/>
            <person name="Nwaokelemeh O.O."/>
            <person name="Nwokenkwo S."/>
            <person name="Obregon M."/>
            <person name="Oguh M."/>
            <person name="Oragunye N."/>
            <person name="Oviedo R.J."/>
            <person name="Parish B.J."/>
            <person name="Parker D.N."/>
            <person name="Parrish J."/>
            <person name="Parks K.L."/>
            <person name="Paul H.A."/>
            <person name="Payton B.A."/>
            <person name="Perez A."/>
            <person name="Perrin W."/>
            <person name="Pickens A."/>
            <person name="Primus E.L."/>
            <person name="Pu L.-L."/>
            <person name="Puazo M."/>
            <person name="Quiles M.M."/>
            <person name="Quiroz J.B."/>
            <person name="Rabata D."/>
            <person name="Reeves K."/>
            <person name="Ruiz S.J."/>
            <person name="Shao H."/>
            <person name="Sisson I."/>
            <person name="Sonaike T."/>
            <person name="Sorelle R.P."/>
            <person name="Sutton A.E."/>
            <person name="Svatek A.F."/>
            <person name="Svetz L.A."/>
            <person name="Tamerisa K.S."/>
            <person name="Taylor T.R."/>
            <person name="Teague B."/>
            <person name="Thomas N."/>
            <person name="Thorn R.D."/>
            <person name="Trejos Z.Y."/>
            <person name="Trevino B.K."/>
            <person name="Ukegbu O.N."/>
            <person name="Urban J.B."/>
            <person name="Vasquez L.I."/>
            <person name="Vera V.A."/>
            <person name="Villasana D.M."/>
            <person name="Wang L."/>
            <person name="Ward-Moore S."/>
            <person name="Warren J.T."/>
            <person name="Wei X."/>
            <person name="White F."/>
            <person name="Williamson A.L."/>
            <person name="Wleczyk R."/>
            <person name="Wooden H.S."/>
            <person name="Wooden S.H."/>
            <person name="Yen J."/>
            <person name="Yoon L."/>
            <person name="Yoon V."/>
            <person name="Zorrilla S.E."/>
            <person name="Nelson D."/>
            <person name="Kucherlapati R."/>
            <person name="Weinstock G."/>
            <person name="Gibbs R.A."/>
        </authorList>
    </citation>
    <scope>NUCLEOTIDE SEQUENCE [LARGE SCALE GENOMIC DNA]</scope>
</reference>
<reference key="12">
    <citation type="journal article" date="2004" name="Genome Res.">
        <title>The status, quality, and expansion of the NIH full-length cDNA project: the Mammalian Gene Collection (MGC).</title>
        <authorList>
            <consortium name="The MGC Project Team"/>
        </authorList>
    </citation>
    <scope>NUCLEOTIDE SEQUENCE [LARGE SCALE MRNA] (ISOFORM P42)</scope>
    <scope>VARIANT SER-162</scope>
    <source>
        <tissue>Brain</tissue>
        <tissue>Uterus</tissue>
    </source>
</reference>
<reference key="13">
    <citation type="journal article" date="1987" name="Eur. J. Biochem.">
        <title>New inducers revealed by the promoter sequence analysis of two interferon-activated human genes.</title>
        <authorList>
            <person name="Wathelet M.G."/>
            <person name="Clauss I.M."/>
            <person name="Nols C.B."/>
            <person name="Content J."/>
            <person name="Huez G.A."/>
        </authorList>
    </citation>
    <scope>NUCLEOTIDE SEQUENCE [GENOMIC DNA] OF 1-28</scope>
</reference>
<reference key="14">
    <citation type="journal article" date="1987" name="Mol. Cell. Biol.">
        <title>Interferon-responsive regulatory elements in the promoter of the human 2',5'-oligo(A) synthetase gene.</title>
        <authorList>
            <person name="Benech P."/>
            <person name="Vigneron M."/>
            <person name="Peretz D."/>
            <person name="Revel M."/>
            <person name="Chebath J."/>
        </authorList>
    </citation>
    <scope>NUCLEOTIDE SEQUENCE [GENOMIC DNA] OF 1-28</scope>
    <source>
        <tissue>Liver</tissue>
    </source>
</reference>
<reference key="15">
    <citation type="journal article" date="1988" name="EMBO J.">
        <title>Interferon-induced binding of nuclear factors to promoter elements of the 2-5A synthetase gene.</title>
        <authorList>
            <person name="Rutherford M.N."/>
            <person name="Hannigan G.E."/>
            <person name="Williams B.R.G."/>
        </authorList>
    </citation>
    <scope>NUCLEOTIDE SEQUENCE [GENOMIC DNA] OF 1-28</scope>
    <source>
        <tissue>Liver</tissue>
    </source>
</reference>
<reference key="16">
    <citation type="journal article" date="1985" name="EMBO J.">
        <title>Human 2-5A synthetase: characterization of a novel cDNA and corresponding gene structure.</title>
        <authorList>
            <person name="Saunders M.E."/>
            <person name="Gewert D.R."/>
            <person name="Tugwell M.E."/>
            <person name="McMahon M."/>
            <person name="Williams B.R.G."/>
        </authorList>
    </citation>
    <scope>NUCLEOTIDE SEQUENCE [MRNA] OF 231-400 (ISOFORM P48)</scope>
    <scope>INDUCTION</scope>
    <source>
        <tissue>Lymphoblast</tissue>
    </source>
</reference>
<reference key="17">
    <citation type="journal article" date="1983" name="Proc. Natl. Acad. Sci. U.S.A.">
        <title>Molecular cloning and sequence of partial cDNA for interferon-induced (2'-5')oligo(A) synthetase mRNA from human cells.</title>
        <authorList>
            <person name="Merlin G."/>
            <person name="Chebath J."/>
            <person name="Benech P."/>
            <person name="Metz R."/>
            <person name="Revel M."/>
        </authorList>
    </citation>
    <scope>NUCLEOTIDE SEQUENCE [MRNA] OF 255-364 (ISOFORM P42)</scope>
</reference>
<reference key="18">
    <citation type="journal article" date="1997" name="J. Biol. Chem.">
        <title>Enzymatic activity of 2'-5'-oligoadenylate synthetase is impaired by specific mutations that affect oligomerization of the protein.</title>
        <authorList>
            <person name="Ghosh A."/>
            <person name="Sarkar S.N."/>
            <person name="Guo W."/>
            <person name="Bandyopadhyay S."/>
            <person name="Sen G.C."/>
        </authorList>
    </citation>
    <scope>CATALYTIC ACTIVITY</scope>
    <scope>SUBUNIT</scope>
    <scope>MUTAGENESIS OF CYS-331; PHE-332 AND LYS-333</scope>
</reference>
<reference key="19">
    <citation type="journal article" date="1999" name="J. Biol. Chem.">
        <title>The nature of the catalytic domain of 2'-5'-oligoadenylate synthetases.</title>
        <authorList>
            <person name="Sarkar S.N."/>
            <person name="Ghosh A."/>
            <person name="Wang H.W."/>
            <person name="Sung S.S."/>
            <person name="Sen G.C."/>
        </authorList>
    </citation>
    <scope>CATALYTIC ACTIVITY</scope>
    <scope>MUTAGENESIS OF ASP-75 AND ASP-77</scope>
</reference>
<reference key="20">
    <citation type="journal article" date="2003" name="Nucleic Acids Res.">
        <title>Characterization of the 2'-5'-oligoadenylate synthetase ubiquitin-like family.</title>
        <authorList>
            <person name="Eskildsen S."/>
            <person name="Justesen J."/>
            <person name="Schierup M.H."/>
            <person name="Hartmann R."/>
        </authorList>
    </citation>
    <scope>FUNCTION</scope>
    <scope>CATALYTIC ACTIVITY</scope>
    <scope>BIOPHYSICOCHEMICAL PROPERTIES</scope>
    <scope>ACTIVITY REGULATION</scope>
</reference>
<reference key="21">
    <citation type="journal article" date="2007" name="Biochimie">
        <title>The human 2'-5'oligoadenylate synthetase family: unique interferon-inducible enzymes catalyzing 2'-5' instead of 3'-5' phosphodiester bond formation.</title>
        <authorList>
            <person name="Hovanessian A.G."/>
            <person name="Justesen J."/>
        </authorList>
    </citation>
    <scope>REVIEW ON FUNCTION</scope>
</reference>
<reference key="22">
    <citation type="journal article" date="2008" name="J. Gen. Virol.">
        <title>The p59 oligoadenylate synthetase-like protein possesses antiviral activity that requires the C-terminal ubiquitin-like domain.</title>
        <authorList>
            <person name="Marques J."/>
            <person name="Anwar J."/>
            <person name="Eskildsen-Larsen S."/>
            <person name="Rebouillat D."/>
            <person name="Paludan S.R."/>
            <person name="Sen G."/>
            <person name="Williams B.R."/>
            <person name="Hartmann R."/>
        </authorList>
    </citation>
    <scope>FUNCTION</scope>
</reference>
<reference key="23">
    <citation type="journal article" date="2009" name="J. Immunol.">
        <title>Distinct antiviral roles for human 2',5'-oligoadenylate synthetase family members against dengue virus infection.</title>
        <authorList>
            <person name="Lin R.J."/>
            <person name="Yu H.P."/>
            <person name="Chang B.L."/>
            <person name="Tang W.C."/>
            <person name="Liao C.L."/>
            <person name="Lin Y.L."/>
        </authorList>
    </citation>
    <scope>FUNCTION</scope>
    <scope>SUBCELLULAR LOCATION</scope>
</reference>
<reference key="24">
    <citation type="journal article" date="2009" name="J. Interferon Cytokine Res.">
        <title>Differential regulation of the OASL and OAS1 genes in response to viral infections.</title>
        <authorList>
            <person name="Melchjorsen J."/>
            <person name="Kristiansen H."/>
            <person name="Christiansen R."/>
            <person name="Rintahaka J."/>
            <person name="Matikainen S."/>
            <person name="Paludan S.R."/>
            <person name="Hartmann R."/>
        </authorList>
    </citation>
    <scope>INDUCTION</scope>
</reference>
<reference key="25">
    <citation type="journal article" date="2009" name="J. Mol. Evol.">
        <title>Evolution of the 2'-5'-oligoadenylate synthetase family in eukaryotes and bacteria.</title>
        <authorList>
            <person name="Kjaer K.H."/>
            <person name="Poulsen J.B."/>
            <person name="Reintamm T."/>
            <person name="Saby E."/>
            <person name="Martensen P.M."/>
            <person name="Kelve M."/>
            <person name="Justesen J."/>
        </authorList>
    </citation>
    <scope>REVIEW</scope>
</reference>
<reference key="26">
    <citation type="journal article" date="2011" name="BMC Syst. Biol.">
        <title>Initial characterization of the human central proteome.</title>
        <authorList>
            <person name="Burkard T.R."/>
            <person name="Planyavsky M."/>
            <person name="Kaupe I."/>
            <person name="Breitwieser F.P."/>
            <person name="Buerckstuemmer T."/>
            <person name="Bennett K.L."/>
            <person name="Superti-Furga G."/>
            <person name="Colinge J."/>
        </authorList>
    </citation>
    <scope>IDENTIFICATION BY MASS SPECTROMETRY [LARGE SCALE ANALYSIS]</scope>
</reference>
<reference key="27">
    <citation type="journal article" date="2011" name="J. Interferon Cytokine Res.">
        <title>The oligoadenylate synthetase family: an ancient protein family with multiple antiviral activities.</title>
        <authorList>
            <person name="Kristiansen H."/>
            <person name="Gad H.H."/>
            <person name="Eskildsen-Larsen S."/>
            <person name="Despres P."/>
            <person name="Hartmann R."/>
        </authorList>
    </citation>
    <scope>REVIEW ON FUNCTION</scope>
</reference>
<reference key="28">
    <citation type="journal article" date="2015" name="Proc. Natl. Acad. Sci. U.S.A.">
        <title>Structural mechanism of sensing long dsRNA via a noncatalytic domain in human oligoadenylate synthetase 3.</title>
        <authorList>
            <person name="Donovan J."/>
            <person name="Whitney G."/>
            <person name="Rath S."/>
            <person name="Korennykh A."/>
        </authorList>
    </citation>
    <scope>CATALYTIC ACTIVITY</scope>
    <scope>MUTAGENESIS OF ASP-75 AND ASP-77</scope>
</reference>
<reference key="29">
    <citation type="journal article" date="2021" name="Nat. Med.">
        <title>A Neanderthal OAS1 isoform protects individuals of European ancestry against COVID-19 susceptibility and severity.</title>
        <authorList>
            <person name="Zhou S."/>
            <person name="Butler-Laporte G."/>
            <person name="Nakanishi T."/>
            <person name="Morrison D.R."/>
            <person name="Afilalo J."/>
            <person name="Afilalo M."/>
            <person name="Laurent L."/>
            <person name="Pietzner M."/>
            <person name="Kerrison N."/>
            <person name="Zhao K."/>
            <person name="Brunet-Ratnasingham E."/>
            <person name="Henry D."/>
            <person name="Kimchi N."/>
            <person name="Afrasiabi Z."/>
            <person name="Rezk N."/>
            <person name="Bouab M."/>
            <person name="Petitjean L."/>
            <person name="Guzman C."/>
            <person name="Xue X."/>
            <person name="Tselios C."/>
            <person name="Vulesevic B."/>
            <person name="Adeleye O."/>
            <person name="Abdullah T."/>
            <person name="Almamlouk N."/>
            <person name="Chen Y."/>
            <person name="Chasse M."/>
            <person name="Durand M."/>
            <person name="Paterson C."/>
            <person name="Normark J."/>
            <person name="Frithiof R."/>
            <person name="Lipcsey M."/>
            <person name="Hultstroem M."/>
            <person name="Greenwood C.M.T."/>
            <person name="Zeberg H."/>
            <person name="Langenberg C."/>
            <person name="Thysell E."/>
            <person name="Pollak M."/>
            <person name="Mooser V."/>
            <person name="Forgetta V."/>
            <person name="Kaufmann D.E."/>
            <person name="Richards J.B."/>
        </authorList>
    </citation>
    <scope>POLYMORPHISM</scope>
    <scope>ALTERNATIVE SPLICING</scope>
</reference>
<reference key="30">
    <citation type="journal article" date="2021" name="Science">
        <title>A prenylated dsRNA sensor protects against severe COVID-19.</title>
        <authorList>
            <consortium name="ISARIC4C Investigators"/>
            <person name="Wickenhagen A."/>
            <person name="Sugrue E."/>
            <person name="Lytras S."/>
            <person name="Kuchi S."/>
            <person name="Noerenberg M."/>
            <person name="Turnbull M.L."/>
            <person name="Loney C."/>
            <person name="Herder V."/>
            <person name="Allan J."/>
            <person name="Jarmson I."/>
            <person name="Cameron-Ruiz N."/>
            <person name="Varjak M."/>
            <person name="Pinto R.M."/>
            <person name="Lee J.Y."/>
            <person name="Iselin L."/>
            <person name="Palmalux N."/>
            <person name="Stewart D.G."/>
            <person name="Swingler S."/>
            <person name="Greenwood E.J.D."/>
            <person name="Crozier T.W.M."/>
            <person name="Gu Q."/>
            <person name="Davies E.L."/>
            <person name="Clohisey S."/>
            <person name="Wang B."/>
            <person name="Trindade Maranhao Costa F."/>
            <person name="Freire Santana M."/>
            <person name="de Lima Ferreira L.C."/>
            <person name="Murphy L."/>
            <person name="Fawkes A."/>
            <person name="Meynert A."/>
            <person name="Grimes G."/>
            <person name="Da Silva Filho J.L."/>
            <person name="Marti M."/>
            <person name="Hughes J."/>
            <person name="Stanton R.J."/>
            <person name="Wang E.C.Y."/>
            <person name="Ho A."/>
            <person name="Davis I."/>
            <person name="Jarrett R.F."/>
            <person name="Castello A."/>
            <person name="Robertson D.L."/>
            <person name="Semple M.G."/>
            <person name="Openshaw P.J.M."/>
            <person name="Palmarini M."/>
            <person name="Lehner P.J."/>
            <person name="Baillie J.K."/>
            <person name="Rihn S.J."/>
            <person name="Wilson S.J."/>
        </authorList>
    </citation>
    <scope>FUNCTION</scope>
    <scope>TISSUE SPECIFICITY</scope>
    <scope>INDUCTION BY IFN AND VIRUSES</scope>
    <scope>SUBCELLULAR LOCATION</scope>
    <scope>ISOPRENYLATION AT CYS-397</scope>
    <scope>MUTAGENESIS OF CYS-397</scope>
    <scope>POLYMORPHISM</scope>
    <scope>ALTERNATIVE SPLICING</scope>
</reference>
<reference key="31">
    <citation type="journal article" date="2013" name="Proc. Natl. Acad. Sci. U.S.A.">
        <title>Structural basis for cytosolic double-stranded RNA surveillance by human oligoadenylate synthetase 1.</title>
        <authorList>
            <person name="Donovan J."/>
            <person name="Dufner M."/>
            <person name="Korennykh A."/>
        </authorList>
    </citation>
    <scope>X-RAY CRYSTALLOGRAPHY (2.7 ANGSTROMS) OF 1-347 IN COMPLEX WITH DSRNA; MAGNESIUM IONS AND ATP</scope>
    <scope>FUNCTION</scope>
    <scope>CATALYTIC ACTIVITY</scope>
    <scope>COFACTOR</scope>
    <scope>ACTIVITY REGULATION</scope>
    <scope>MUTAGENESIS OF LYS-66; ASP-148 AND GLU-233</scope>
</reference>
<reference key="32">
    <citation type="journal article" date="2018" name="Am. J. Hum. Genet.">
        <title>Heterozygous Mutations in OAS1 Cause Infantile-Onset Pulmonary Alveolar Proteinosis with Hypogammaglobulinemia.</title>
        <authorList>
            <person name="Cho K."/>
            <person name="Yamada M."/>
            <person name="Agematsu K."/>
            <person name="Kanegane H."/>
            <person name="Miyake N."/>
            <person name="Ueki M."/>
            <person name="Akimoto T."/>
            <person name="Kobayashi N."/>
            <person name="Ikemoto S."/>
            <person name="Tanino M."/>
            <person name="Fujita A."/>
            <person name="Hayasaka I."/>
            <person name="Miyamoto S."/>
            <person name="Tanaka-Kubota M."/>
            <person name="Nakata K."/>
            <person name="Shiina M."/>
            <person name="Ogata K."/>
            <person name="Minakami H."/>
            <person name="Matsumoto N."/>
            <person name="Ariga T."/>
        </authorList>
    </citation>
    <scope>VARIANTS IMD100 VAL-76; TYR-109 AND VAL-198</scope>
    <scope>INVOLVEMENT IN IMD100</scope>
</reference>
<reference key="33">
    <citation type="journal article" date="2021" name="Sci. Immunol.">
        <title>Heterozygous OAS1 gain-of-function variants cause an autoinflammatory immunodeficiency.</title>
        <authorList>
            <person name="Magg T."/>
            <person name="Okano T."/>
            <person name="Koenig L.M."/>
            <person name="Boehmer D.F.R."/>
            <person name="Schwartz S.L."/>
            <person name="Inoue K."/>
            <person name="Heimall J."/>
            <person name="Licciardi F."/>
            <person name="Ley-Zaporozhan J."/>
            <person name="Ferdman R.M."/>
            <person name="Caballero-Oteyza A."/>
            <person name="Park E.N."/>
            <person name="Calderon B.M."/>
            <person name="Dey D."/>
            <person name="Kanegane H."/>
            <person name="Cho K."/>
            <person name="Montin D."/>
            <person name="Reiter K."/>
            <person name="Griese M."/>
            <person name="Albert M.H."/>
            <person name="Rohlfs M."/>
            <person name="Gray P."/>
            <person name="Walz C."/>
            <person name="Conn G.L."/>
            <person name="Sullivan K.E."/>
            <person name="Klein C."/>
            <person name="Morio T."/>
            <person name="Hauck F."/>
        </authorList>
    </citation>
    <scope>VARIANTS IMD100 VAL-76; TYR-109; GLY-121 AND VAL-198</scope>
    <scope>CHARACTERIZATION OF VARIANTS IMD100 VAL-76; TYR-109; GLY-121 AND VAL-198</scope>
    <scope>INVOLVEMENT IN IMD100</scope>
    <scope>FUNCTION</scope>
</reference>
<protein>
    <recommendedName>
        <fullName>2'-5'-oligoadenylate synthase 1</fullName>
        <shortName>(2-5')oligo(A) synthase 1</shortName>
        <shortName>2-5A synthase 1</shortName>
        <ecNumber evidence="3 4 12 15 19 20 21">2.7.7.84</ecNumber>
    </recommendedName>
    <alternativeName>
        <fullName>E18/E16</fullName>
    </alternativeName>
    <alternativeName>
        <fullName>p46/p42 OAS</fullName>
    </alternativeName>
</protein>
<organism>
    <name type="scientific">Homo sapiens</name>
    <name type="common">Human</name>
    <dbReference type="NCBI Taxonomy" id="9606"/>
    <lineage>
        <taxon>Eukaryota</taxon>
        <taxon>Metazoa</taxon>
        <taxon>Chordata</taxon>
        <taxon>Craniata</taxon>
        <taxon>Vertebrata</taxon>
        <taxon>Euteleostomi</taxon>
        <taxon>Mammalia</taxon>
        <taxon>Eutheria</taxon>
        <taxon>Euarchontoglires</taxon>
        <taxon>Primates</taxon>
        <taxon>Haplorrhini</taxon>
        <taxon>Catarrhini</taxon>
        <taxon>Hominidae</taxon>
        <taxon>Homo</taxon>
    </lineage>
</organism>
<dbReference type="EC" id="2.7.7.84" evidence="3 4 12 15 19 20 21"/>
<dbReference type="EMBL" id="M11809">
    <property type="protein sequence ID" value="AAB59552.1"/>
    <property type="molecule type" value="Genomic_DNA"/>
</dbReference>
<dbReference type="EMBL" id="M11805">
    <property type="protein sequence ID" value="AAB59552.1"/>
    <property type="status" value="JOINED"/>
    <property type="molecule type" value="Genomic_DNA"/>
</dbReference>
<dbReference type="EMBL" id="M11806">
    <property type="protein sequence ID" value="AAB59552.1"/>
    <property type="status" value="JOINED"/>
    <property type="molecule type" value="Genomic_DNA"/>
</dbReference>
<dbReference type="EMBL" id="M11807">
    <property type="protein sequence ID" value="AAB59552.1"/>
    <property type="status" value="JOINED"/>
    <property type="molecule type" value="Genomic_DNA"/>
</dbReference>
<dbReference type="EMBL" id="M11808">
    <property type="protein sequence ID" value="AAB59552.1"/>
    <property type="status" value="JOINED"/>
    <property type="molecule type" value="Genomic_DNA"/>
</dbReference>
<dbReference type="EMBL" id="M11810">
    <property type="protein sequence ID" value="AAB59553.1"/>
    <property type="molecule type" value="Genomic_DNA"/>
</dbReference>
<dbReference type="EMBL" id="X02874">
    <property type="protein sequence ID" value="CAA26633.1"/>
    <property type="molecule type" value="mRNA"/>
</dbReference>
<dbReference type="EMBL" id="X02875">
    <property type="protein sequence ID" value="CAA26634.1"/>
    <property type="molecule type" value="mRNA"/>
</dbReference>
<dbReference type="EMBL" id="X04371">
    <property type="protein sequence ID" value="CAB51602.1"/>
    <property type="molecule type" value="mRNA"/>
</dbReference>
<dbReference type="EMBL" id="D00068">
    <property type="protein sequence ID" value="BAA00047.1"/>
    <property type="molecule type" value="mRNA"/>
</dbReference>
<dbReference type="EMBL" id="M63849">
    <property type="protein sequence ID" value="AAA39857.1"/>
    <property type="status" value="ALT_INIT"/>
    <property type="molecule type" value="Genomic_DNA"/>
</dbReference>
<dbReference type="EMBL" id="M63850">
    <property type="protein sequence ID" value="AAA39858.1"/>
    <property type="status" value="ALT_INIT"/>
    <property type="molecule type" value="Genomic_DNA"/>
</dbReference>
<dbReference type="EMBL" id="AJ629455">
    <property type="protein sequence ID" value="CAF33358.1"/>
    <property type="status" value="ALT_FRAME"/>
    <property type="molecule type" value="mRNA"/>
</dbReference>
<dbReference type="EMBL" id="AY730628">
    <property type="protein sequence ID" value="AAW63050.1"/>
    <property type="molecule type" value="mRNA"/>
</dbReference>
<dbReference type="EMBL" id="DQ445949">
    <property type="protein sequence ID" value="ABE27977.1"/>
    <property type="molecule type" value="Genomic_DNA"/>
</dbReference>
<dbReference type="EMBL" id="AK291003">
    <property type="protein sequence ID" value="BAF83692.1"/>
    <property type="molecule type" value="mRNA"/>
</dbReference>
<dbReference type="EMBL" id="BT006785">
    <property type="protein sequence ID" value="AAP35431.1"/>
    <property type="molecule type" value="mRNA"/>
</dbReference>
<dbReference type="EMBL" id="AK223006">
    <property type="protein sequence ID" value="BAD96726.1"/>
    <property type="status" value="ALT_INIT"/>
    <property type="molecule type" value="mRNA"/>
</dbReference>
<dbReference type="EMBL" id="AC004551">
    <property type="status" value="NOT_ANNOTATED_CDS"/>
    <property type="molecule type" value="Genomic_DNA"/>
</dbReference>
<dbReference type="EMBL" id="BC000562">
    <property type="protein sequence ID" value="AAH00562.4"/>
    <property type="molecule type" value="mRNA"/>
</dbReference>
<dbReference type="EMBL" id="BC061587">
    <property type="protein sequence ID" value="AAH61587.1"/>
    <property type="molecule type" value="mRNA"/>
</dbReference>
<dbReference type="EMBL" id="BC071981">
    <property type="protein sequence ID" value="AAH71981.3"/>
    <property type="molecule type" value="mRNA"/>
</dbReference>
<dbReference type="EMBL" id="X06560">
    <property type="protein sequence ID" value="CAA29803.1"/>
    <property type="molecule type" value="Genomic_DNA"/>
</dbReference>
<dbReference type="EMBL" id="M18099">
    <property type="protein sequence ID" value="AAA59955.1"/>
    <property type="status" value="ALT_INIT"/>
    <property type="molecule type" value="Genomic_DNA"/>
</dbReference>
<dbReference type="EMBL" id="X07179">
    <property type="protein sequence ID" value="CAA30164.1"/>
    <property type="status" value="ALT_INIT"/>
    <property type="molecule type" value="Genomic_DNA"/>
</dbReference>
<dbReference type="EMBL" id="X02661">
    <property type="protein sequence ID" value="CAA26497.1"/>
    <property type="status" value="ALT_SEQ"/>
    <property type="molecule type" value="mRNA"/>
</dbReference>
<dbReference type="CCDS" id="CCDS31905.1">
    <molecule id="P00973-3"/>
</dbReference>
<dbReference type="CCDS" id="CCDS41838.1">
    <molecule id="P00973-1"/>
</dbReference>
<dbReference type="CCDS" id="CCDS44980.1">
    <molecule id="P00973-2"/>
</dbReference>
<dbReference type="CCDS" id="CCDS81742.1">
    <molecule id="P00973-4"/>
</dbReference>
<dbReference type="PIR" id="A39417">
    <property type="entry name" value="SYMSO2"/>
</dbReference>
<dbReference type="PIR" id="A91013">
    <property type="entry name" value="SYHU16"/>
</dbReference>
<dbReference type="PIR" id="B24359">
    <property type="entry name" value="SYHU18"/>
</dbReference>
<dbReference type="PIR" id="B39417">
    <property type="entry name" value="SYMSO3"/>
</dbReference>
<dbReference type="RefSeq" id="NP_001027581.1">
    <molecule id="P00973-3"/>
    <property type="nucleotide sequence ID" value="NM_001032409.3"/>
</dbReference>
<dbReference type="RefSeq" id="NP_001307080.1">
    <molecule id="P00973-4"/>
    <property type="nucleotide sequence ID" value="NM_001320151.2"/>
</dbReference>
<dbReference type="RefSeq" id="NP_002525.2">
    <molecule id="P00973-2"/>
    <property type="nucleotide sequence ID" value="NM_002534.4"/>
</dbReference>
<dbReference type="RefSeq" id="NP_058132.2">
    <molecule id="P00973-1"/>
    <property type="nucleotide sequence ID" value="NM_016816.4"/>
</dbReference>
<dbReference type="PDB" id="4IG8">
    <property type="method" value="X-ray"/>
    <property type="resolution" value="2.70 A"/>
    <property type="chains" value="A=1-347"/>
</dbReference>
<dbReference type="PDBsum" id="4IG8"/>
<dbReference type="SMR" id="P00973"/>
<dbReference type="BioGRID" id="110992">
    <property type="interactions" value="20"/>
</dbReference>
<dbReference type="FunCoup" id="P00973">
    <property type="interactions" value="1239"/>
</dbReference>
<dbReference type="IntAct" id="P00973">
    <property type="interactions" value="15"/>
</dbReference>
<dbReference type="MINT" id="P00973"/>
<dbReference type="STRING" id="9606.ENSP00000388001"/>
<dbReference type="DrugBank" id="DB02987">
    <property type="generic name" value="Cysteine-S-acetamide"/>
</dbReference>
<dbReference type="iPTMnet" id="P00973"/>
<dbReference type="PhosphoSitePlus" id="P00973"/>
<dbReference type="BioMuta" id="OAS1"/>
<dbReference type="DMDM" id="296439492"/>
<dbReference type="jPOST" id="P00973"/>
<dbReference type="MassIVE" id="P00973"/>
<dbReference type="PaxDb" id="9606-ENSP00000388001"/>
<dbReference type="PeptideAtlas" id="P00973"/>
<dbReference type="ProteomicsDB" id="29167"/>
<dbReference type="ProteomicsDB" id="51294">
    <molecule id="P00973-1"/>
</dbReference>
<dbReference type="ProteomicsDB" id="51295">
    <molecule id="P00973-2"/>
</dbReference>
<dbReference type="ProteomicsDB" id="51296">
    <molecule id="P00973-3"/>
</dbReference>
<dbReference type="ProteomicsDB" id="51297">
    <molecule id="P00973-4"/>
</dbReference>
<dbReference type="Pumba" id="P00973"/>
<dbReference type="Antibodypedia" id="1275">
    <property type="antibodies" value="323 antibodies from 33 providers"/>
</dbReference>
<dbReference type="DNASU" id="4938"/>
<dbReference type="Ensembl" id="ENST00000202917.10">
    <molecule id="P00973-1"/>
    <property type="protein sequence ID" value="ENSP00000202917.5"/>
    <property type="gene ID" value="ENSG00000089127.15"/>
</dbReference>
<dbReference type="Ensembl" id="ENST00000445409.7">
    <molecule id="P00973-3"/>
    <property type="protein sequence ID" value="ENSP00000388001.2"/>
    <property type="gene ID" value="ENSG00000089127.15"/>
</dbReference>
<dbReference type="Ensembl" id="ENST00000452357.7">
    <molecule id="P00973-2"/>
    <property type="protein sequence ID" value="ENSP00000415721.2"/>
    <property type="gene ID" value="ENSG00000089127.15"/>
</dbReference>
<dbReference type="Ensembl" id="ENST00000551241.6">
    <molecule id="P00973-4"/>
    <property type="protein sequence ID" value="ENSP00000448790.1"/>
    <property type="gene ID" value="ENSG00000089127.15"/>
</dbReference>
<dbReference type="Ensembl" id="ENST00000680189.1">
    <molecule id="P00973-1"/>
    <property type="protein sequence ID" value="ENSP00000505572.1"/>
    <property type="gene ID" value="ENSG00000089127.15"/>
</dbReference>
<dbReference type="Ensembl" id="ENST00000681934.1">
    <molecule id="P00973-1"/>
    <property type="protein sequence ID" value="ENSP00000505482.1"/>
    <property type="gene ID" value="ENSG00000089127.15"/>
</dbReference>
<dbReference type="GeneID" id="4938"/>
<dbReference type="KEGG" id="hsa:4938"/>
<dbReference type="MANE-Select" id="ENST00000202917.10">
    <property type="protein sequence ID" value="ENSP00000202917.5"/>
    <property type="RefSeq nucleotide sequence ID" value="NM_016816.4"/>
    <property type="RefSeq protein sequence ID" value="NP_058132.2"/>
</dbReference>
<dbReference type="UCSC" id="uc001tub.4">
    <molecule id="P00973-1"/>
    <property type="organism name" value="human"/>
</dbReference>
<dbReference type="AGR" id="HGNC:8086"/>
<dbReference type="CTD" id="4938"/>
<dbReference type="DisGeNET" id="4938"/>
<dbReference type="GeneCards" id="OAS1"/>
<dbReference type="HGNC" id="HGNC:8086">
    <property type="gene designation" value="OAS1"/>
</dbReference>
<dbReference type="HPA" id="ENSG00000089127">
    <property type="expression patterns" value="Tissue enhanced (salivary gland, urinary bladder)"/>
</dbReference>
<dbReference type="MalaCards" id="OAS1"/>
<dbReference type="MIM" id="164350">
    <property type="type" value="gene"/>
</dbReference>
<dbReference type="MIM" id="618042">
    <property type="type" value="phenotype"/>
</dbReference>
<dbReference type="neXtProt" id="NX_P00973"/>
<dbReference type="OpenTargets" id="ENSG00000089127"/>
<dbReference type="Orphanet" id="572428">
    <property type="disease" value="Infantile-onset pulmonary alveolar proteinosis-hypogammaglobulinemia"/>
</dbReference>
<dbReference type="PharmGKB" id="PA31875"/>
<dbReference type="VEuPathDB" id="HostDB:ENSG00000089127"/>
<dbReference type="eggNOG" id="ENOG502RH25">
    <property type="taxonomic scope" value="Eukaryota"/>
</dbReference>
<dbReference type="GeneTree" id="ENSGT00510000046406"/>
<dbReference type="InParanoid" id="P00973"/>
<dbReference type="OMA" id="SWILLPQ"/>
<dbReference type="OrthoDB" id="1885901at2759"/>
<dbReference type="PAN-GO" id="P00973">
    <property type="GO annotations" value="8 GO annotations based on evolutionary models"/>
</dbReference>
<dbReference type="PhylomeDB" id="P00973"/>
<dbReference type="TreeFam" id="TF329749"/>
<dbReference type="BioCyc" id="MetaCyc:ENSG00000089127-MONOMER"/>
<dbReference type="BRENDA" id="2.7.7.84">
    <property type="organism ID" value="2681"/>
</dbReference>
<dbReference type="PathwayCommons" id="P00973"/>
<dbReference type="Reactome" id="R-HSA-877300">
    <property type="pathway name" value="Interferon gamma signaling"/>
</dbReference>
<dbReference type="Reactome" id="R-HSA-8983711">
    <property type="pathway name" value="OAS antiviral response"/>
</dbReference>
<dbReference type="Reactome" id="R-HSA-909733">
    <property type="pathway name" value="Interferon alpha/beta signaling"/>
</dbReference>
<dbReference type="SABIO-RK" id="P00973"/>
<dbReference type="SignaLink" id="P00973"/>
<dbReference type="BioGRID-ORCS" id="4938">
    <property type="hits" value="17 hits in 1157 CRISPR screens"/>
</dbReference>
<dbReference type="CD-CODE" id="DEE660B4">
    <property type="entry name" value="Stress granule"/>
</dbReference>
<dbReference type="ChiTaRS" id="OAS1">
    <property type="organism name" value="human"/>
</dbReference>
<dbReference type="EvolutionaryTrace" id="P00973"/>
<dbReference type="GeneWiki" id="OAS1"/>
<dbReference type="GenomeRNAi" id="4938"/>
<dbReference type="Pharos" id="P00973">
    <property type="development level" value="Tbio"/>
</dbReference>
<dbReference type="PRO" id="PR:P00973"/>
<dbReference type="Proteomes" id="UP000005640">
    <property type="component" value="Chromosome 12"/>
</dbReference>
<dbReference type="RNAct" id="P00973">
    <property type="molecule type" value="protein"/>
</dbReference>
<dbReference type="Bgee" id="ENSG00000089127">
    <property type="expression patterns" value="Expressed in monocyte and 165 other cell types or tissues"/>
</dbReference>
<dbReference type="ExpressionAtlas" id="P00973">
    <property type="expression patterns" value="baseline and differential"/>
</dbReference>
<dbReference type="GO" id="GO:0005737">
    <property type="term" value="C:cytoplasm"/>
    <property type="evidence" value="ECO:0000314"/>
    <property type="project" value="UniProtKB"/>
</dbReference>
<dbReference type="GO" id="GO:0005829">
    <property type="term" value="C:cytosol"/>
    <property type="evidence" value="ECO:0000314"/>
    <property type="project" value="ARUK-UCL"/>
</dbReference>
<dbReference type="GO" id="GO:0005783">
    <property type="term" value="C:endoplasmic reticulum"/>
    <property type="evidence" value="ECO:0007669"/>
    <property type="project" value="UniProtKB-SubCell"/>
</dbReference>
<dbReference type="GO" id="GO:0005576">
    <property type="term" value="C:extracellular region"/>
    <property type="evidence" value="ECO:0007669"/>
    <property type="project" value="UniProtKB-SubCell"/>
</dbReference>
<dbReference type="GO" id="GO:0016020">
    <property type="term" value="C:membrane"/>
    <property type="evidence" value="ECO:0000318"/>
    <property type="project" value="GO_Central"/>
</dbReference>
<dbReference type="GO" id="GO:0005739">
    <property type="term" value="C:mitochondrion"/>
    <property type="evidence" value="ECO:0000314"/>
    <property type="project" value="ARUK-UCL"/>
</dbReference>
<dbReference type="GO" id="GO:0005654">
    <property type="term" value="C:nucleoplasm"/>
    <property type="evidence" value="ECO:0000314"/>
    <property type="project" value="HPA"/>
</dbReference>
<dbReference type="GO" id="GO:0005634">
    <property type="term" value="C:nucleus"/>
    <property type="evidence" value="ECO:0000314"/>
    <property type="project" value="ARUK-UCL"/>
</dbReference>
<dbReference type="GO" id="GO:0005840">
    <property type="term" value="C:ribosome"/>
    <property type="evidence" value="ECO:0000314"/>
    <property type="project" value="ARUK-UCL"/>
</dbReference>
<dbReference type="GO" id="GO:0001730">
    <property type="term" value="F:2'-5'-oligoadenylate synthetase activity"/>
    <property type="evidence" value="ECO:0000314"/>
    <property type="project" value="ARUK-UCL"/>
</dbReference>
<dbReference type="GO" id="GO:0005524">
    <property type="term" value="F:ATP binding"/>
    <property type="evidence" value="ECO:0000304"/>
    <property type="project" value="UniProtKB"/>
</dbReference>
<dbReference type="GO" id="GO:0003725">
    <property type="term" value="F:double-stranded RNA binding"/>
    <property type="evidence" value="ECO:0000314"/>
    <property type="project" value="UniProtKB"/>
</dbReference>
<dbReference type="GO" id="GO:0046872">
    <property type="term" value="F:metal ion binding"/>
    <property type="evidence" value="ECO:0007669"/>
    <property type="project" value="UniProtKB-KW"/>
</dbReference>
<dbReference type="GO" id="GO:0140374">
    <property type="term" value="P:antiviral innate immune response"/>
    <property type="evidence" value="ECO:0000314"/>
    <property type="project" value="UniProtKB"/>
</dbReference>
<dbReference type="GO" id="GO:0071360">
    <property type="term" value="P:cellular response to exogenous dsRNA"/>
    <property type="evidence" value="ECO:0000314"/>
    <property type="project" value="ARUK-UCL"/>
</dbReference>
<dbReference type="GO" id="GO:0035457">
    <property type="term" value="P:cellular response to interferon-alpha"/>
    <property type="evidence" value="ECO:0000314"/>
    <property type="project" value="UniProtKB"/>
</dbReference>
<dbReference type="GO" id="GO:0035458">
    <property type="term" value="P:cellular response to interferon-beta"/>
    <property type="evidence" value="ECO:0000314"/>
    <property type="project" value="ARUK-UCL"/>
</dbReference>
<dbReference type="GO" id="GO:0098586">
    <property type="term" value="P:cellular response to virus"/>
    <property type="evidence" value="ECO:0000270"/>
    <property type="project" value="ARUK-UCL"/>
</dbReference>
<dbReference type="GO" id="GO:0042742">
    <property type="term" value="P:defense response to bacterium"/>
    <property type="evidence" value="ECO:0000315"/>
    <property type="project" value="ARUK-UCL"/>
</dbReference>
<dbReference type="GO" id="GO:0051607">
    <property type="term" value="P:defense response to virus"/>
    <property type="evidence" value="ECO:0000314"/>
    <property type="project" value="ARUK-UCL"/>
</dbReference>
<dbReference type="GO" id="GO:0042593">
    <property type="term" value="P:glucose homeostasis"/>
    <property type="evidence" value="ECO:0000315"/>
    <property type="project" value="UniProtKB"/>
</dbReference>
<dbReference type="GO" id="GO:0006006">
    <property type="term" value="P:glucose metabolic process"/>
    <property type="evidence" value="ECO:0000315"/>
    <property type="project" value="UniProtKB"/>
</dbReference>
<dbReference type="GO" id="GO:0070106">
    <property type="term" value="P:interleukin-27-mediated signaling pathway"/>
    <property type="evidence" value="ECO:0000270"/>
    <property type="project" value="ARUK-UCL"/>
</dbReference>
<dbReference type="GO" id="GO:2000342">
    <property type="term" value="P:negative regulation of chemokine (C-X-C motif) ligand 2 production"/>
    <property type="evidence" value="ECO:0000315"/>
    <property type="project" value="ARUK-UCL"/>
</dbReference>
<dbReference type="GO" id="GO:0071659">
    <property type="term" value="P:negative regulation of IP-10 production"/>
    <property type="evidence" value="ECO:0000315"/>
    <property type="project" value="ARUK-UCL"/>
</dbReference>
<dbReference type="GO" id="GO:0060339">
    <property type="term" value="P:negative regulation of type I interferon-mediated signaling pathway"/>
    <property type="evidence" value="ECO:0000315"/>
    <property type="project" value="ARUK-UCL"/>
</dbReference>
<dbReference type="GO" id="GO:0045071">
    <property type="term" value="P:negative regulation of viral genome replication"/>
    <property type="evidence" value="ECO:0000314"/>
    <property type="project" value="UniProtKB"/>
</dbReference>
<dbReference type="GO" id="GO:1901857">
    <property type="term" value="P:positive regulation of cellular respiration"/>
    <property type="evidence" value="ECO:0000314"/>
    <property type="project" value="ARUK-UCL"/>
</dbReference>
<dbReference type="GO" id="GO:0032728">
    <property type="term" value="P:positive regulation of interferon-beta production"/>
    <property type="evidence" value="ECO:0000315"/>
    <property type="project" value="ARUK-UCL"/>
</dbReference>
<dbReference type="GO" id="GO:0071639">
    <property type="term" value="P:positive regulation of monocyte chemotactic protein-1 production"/>
    <property type="evidence" value="ECO:0000315"/>
    <property type="project" value="ARUK-UCL"/>
</dbReference>
<dbReference type="GO" id="GO:0032760">
    <property type="term" value="P:positive regulation of tumor necrosis factor production"/>
    <property type="evidence" value="ECO:0000315"/>
    <property type="project" value="ARUK-UCL"/>
</dbReference>
<dbReference type="GO" id="GO:0051259">
    <property type="term" value="P:protein complex oligomerization"/>
    <property type="evidence" value="ECO:0000314"/>
    <property type="project" value="UniProtKB"/>
</dbReference>
<dbReference type="GO" id="GO:0060700">
    <property type="term" value="P:regulation of ribonuclease activity"/>
    <property type="evidence" value="ECO:0000314"/>
    <property type="project" value="UniProtKB"/>
</dbReference>
<dbReference type="GO" id="GO:0009615">
    <property type="term" value="P:response to virus"/>
    <property type="evidence" value="ECO:0000314"/>
    <property type="project" value="UniProtKB"/>
</dbReference>
<dbReference type="GO" id="GO:0043129">
    <property type="term" value="P:surfactant homeostasis"/>
    <property type="evidence" value="ECO:0000315"/>
    <property type="project" value="ARUK-UCL"/>
</dbReference>
<dbReference type="GO" id="GO:0034138">
    <property type="term" value="P:toll-like receptor 3 signaling pathway"/>
    <property type="evidence" value="ECO:0000315"/>
    <property type="project" value="ARUK-UCL"/>
</dbReference>
<dbReference type="GO" id="GO:0034142">
    <property type="term" value="P:toll-like receptor 4 signaling pathway"/>
    <property type="evidence" value="ECO:0000315"/>
    <property type="project" value="ARUK-UCL"/>
</dbReference>
<dbReference type="GO" id="GO:0060337">
    <property type="term" value="P:type I interferon-mediated signaling pathway"/>
    <property type="evidence" value="ECO:0000315"/>
    <property type="project" value="ARUK-UCL"/>
</dbReference>
<dbReference type="CDD" id="cd05400">
    <property type="entry name" value="NT_2-5OAS_ClassI-CCAase"/>
    <property type="match status" value="1"/>
</dbReference>
<dbReference type="FunFam" id="1.10.1410.20:FF:000001">
    <property type="entry name" value="2'-5'-oligoadenylate synthetase 1"/>
    <property type="match status" value="1"/>
</dbReference>
<dbReference type="FunFam" id="3.30.460.10:FF:000007">
    <property type="entry name" value="2'-5'-oligoadenylate synthetase 1"/>
    <property type="match status" value="1"/>
</dbReference>
<dbReference type="Gene3D" id="1.10.1410.20">
    <property type="entry name" value="2'-5'-oligoadenylate synthetase 1, domain 2"/>
    <property type="match status" value="1"/>
</dbReference>
<dbReference type="Gene3D" id="3.30.460.10">
    <property type="entry name" value="Beta Polymerase, domain 2"/>
    <property type="match status" value="1"/>
</dbReference>
<dbReference type="InterPro" id="IPR018952">
    <property type="entry name" value="2-5-oligoAdlate_synth_1_dom2/C"/>
</dbReference>
<dbReference type="InterPro" id="IPR006117">
    <property type="entry name" value="2-5OAS_C_CS"/>
</dbReference>
<dbReference type="InterPro" id="IPR043518">
    <property type="entry name" value="2-5OAS_N_CS"/>
</dbReference>
<dbReference type="InterPro" id="IPR006116">
    <property type="entry name" value="NT_2-5OAS_ClassI-CCAase"/>
</dbReference>
<dbReference type="InterPro" id="IPR043519">
    <property type="entry name" value="NT_sf"/>
</dbReference>
<dbReference type="InterPro" id="IPR002934">
    <property type="entry name" value="Polymerase_NTP_transf_dom"/>
</dbReference>
<dbReference type="PANTHER" id="PTHR11258:SF13">
    <property type="entry name" value="2'-5'-OLIGOADENYLATE SYNTHASE 1"/>
    <property type="match status" value="1"/>
</dbReference>
<dbReference type="PANTHER" id="PTHR11258">
    <property type="entry name" value="2-5 OLIGOADENYLATE SYNTHETASE"/>
    <property type="match status" value="1"/>
</dbReference>
<dbReference type="Pfam" id="PF01909">
    <property type="entry name" value="NTP_transf_2"/>
    <property type="match status" value="1"/>
</dbReference>
<dbReference type="Pfam" id="PF10421">
    <property type="entry name" value="OAS1_C"/>
    <property type="match status" value="1"/>
</dbReference>
<dbReference type="SUPFAM" id="SSF81301">
    <property type="entry name" value="Nucleotidyltransferase"/>
    <property type="match status" value="1"/>
</dbReference>
<dbReference type="SUPFAM" id="SSF81631">
    <property type="entry name" value="PAP/OAS1 substrate-binding domain"/>
    <property type="match status" value="1"/>
</dbReference>
<dbReference type="PROSITE" id="PS00832">
    <property type="entry name" value="25A_SYNTH_1"/>
    <property type="match status" value="1"/>
</dbReference>
<dbReference type="PROSITE" id="PS00833">
    <property type="entry name" value="25A_SYNTH_2"/>
    <property type="match status" value="1"/>
</dbReference>
<dbReference type="PROSITE" id="PS50152">
    <property type="entry name" value="25A_SYNTH_3"/>
    <property type="match status" value="1"/>
</dbReference>
<keyword id="KW-0002">3D-structure</keyword>
<keyword id="KW-0025">Alternative splicing</keyword>
<keyword id="KW-0051">Antiviral defense</keyword>
<keyword id="KW-0067">ATP-binding</keyword>
<keyword id="KW-0963">Cytoplasm</keyword>
<keyword id="KW-0225">Disease variant</keyword>
<keyword id="KW-0256">Endoplasmic reticulum</keyword>
<keyword id="KW-0945">Host-virus interaction</keyword>
<keyword id="KW-0391">Immunity</keyword>
<keyword id="KW-0399">Innate immunity</keyword>
<keyword id="KW-0449">Lipoprotein</keyword>
<keyword id="KW-0460">Magnesium</keyword>
<keyword id="KW-0479">Metal-binding</keyword>
<keyword id="KW-0492">Microsome</keyword>
<keyword id="KW-0496">Mitochondrion</keyword>
<keyword id="KW-0547">Nucleotide-binding</keyword>
<keyword id="KW-0548">Nucleotidyltransferase</keyword>
<keyword id="KW-0539">Nucleus</keyword>
<keyword id="KW-0636">Prenylation</keyword>
<keyword id="KW-1267">Proteomics identification</keyword>
<keyword id="KW-1185">Reference proteome</keyword>
<keyword id="KW-0694">RNA-binding</keyword>
<keyword id="KW-0964">Secreted</keyword>
<keyword id="KW-0808">Transferase</keyword>
<proteinExistence type="evidence at protein level"/>
<gene>
    <name type="primary">OAS1</name>
    <name type="synonym">OIAS</name>
</gene>
<evidence type="ECO:0000250" key="1">
    <source>
        <dbReference type="UniProtKB" id="P29728"/>
    </source>
</evidence>
<evidence type="ECO:0000250" key="2">
    <source>
        <dbReference type="UniProtKB" id="Q29599"/>
    </source>
</evidence>
<evidence type="ECO:0000269" key="3">
    <source>
    </source>
</evidence>
<evidence type="ECO:0000269" key="4">
    <source>
    </source>
</evidence>
<evidence type="ECO:0000269" key="5">
    <source>
    </source>
</evidence>
<evidence type="ECO:0000269" key="6">
    <source>
    </source>
</evidence>
<evidence type="ECO:0000269" key="7">
    <source>
    </source>
</evidence>
<evidence type="ECO:0000269" key="8">
    <source>
    </source>
</evidence>
<evidence type="ECO:0000269" key="9">
    <source>
    </source>
</evidence>
<evidence type="ECO:0000269" key="10">
    <source>
    </source>
</evidence>
<evidence type="ECO:0000269" key="11">
    <source>
    </source>
</evidence>
<evidence type="ECO:0000269" key="12">
    <source>
    </source>
</evidence>
<evidence type="ECO:0000269" key="13">
    <source>
    </source>
</evidence>
<evidence type="ECO:0000269" key="14">
    <source>
    </source>
</evidence>
<evidence type="ECO:0000269" key="15">
    <source>
    </source>
</evidence>
<evidence type="ECO:0000269" key="16">
    <source>
    </source>
</evidence>
<evidence type="ECO:0000269" key="17">
    <source>
    </source>
</evidence>
<evidence type="ECO:0000269" key="18">
    <source>
    </source>
</evidence>
<evidence type="ECO:0000269" key="19">
    <source>
    </source>
</evidence>
<evidence type="ECO:0000269" key="20">
    <source>
    </source>
</evidence>
<evidence type="ECO:0000269" key="21">
    <source>
    </source>
</evidence>
<evidence type="ECO:0000269" key="22">
    <source ref="10"/>
</evidence>
<evidence type="ECO:0000269" key="23">
    <source ref="7"/>
</evidence>
<evidence type="ECO:0000269" key="24">
    <source ref="9"/>
</evidence>
<evidence type="ECO:0000303" key="25">
    <source>
    </source>
</evidence>
<evidence type="ECO:0000303" key="26">
    <source>
    </source>
</evidence>
<evidence type="ECO:0000303" key="27">
    <source>
    </source>
</evidence>
<evidence type="ECO:0000303" key="28">
    <source>
    </source>
</evidence>
<evidence type="ECO:0000303" key="29">
    <source>
    </source>
</evidence>
<evidence type="ECO:0000303" key="30">
    <source>
    </source>
</evidence>
<evidence type="ECO:0000303" key="31">
    <source>
    </source>
</evidence>
<evidence type="ECO:0000303" key="32">
    <source>
    </source>
</evidence>
<evidence type="ECO:0000303" key="33">
    <source>
    </source>
</evidence>
<evidence type="ECO:0000303" key="34">
    <source>
    </source>
</evidence>
<evidence type="ECO:0000303" key="35">
    <source ref="10"/>
</evidence>
<evidence type="ECO:0000303" key="36">
    <source ref="9"/>
</evidence>
<evidence type="ECO:0000305" key="37"/>
<evidence type="ECO:0000305" key="38">
    <source>
    </source>
</evidence>
<evidence type="ECO:0007744" key="39">
    <source>
        <dbReference type="PDB" id="4IG8"/>
    </source>
</evidence>
<evidence type="ECO:0007829" key="40">
    <source>
        <dbReference type="PDB" id="4IG8"/>
    </source>
</evidence>
<feature type="chain" id="PRO_0000160259" description="2'-5'-oligoadenylate synthase 1">
    <location>
        <begin position="1"/>
        <end position="400"/>
    </location>
</feature>
<feature type="region of interest" description="Interaction with dsRNA" evidence="12 39">
    <location>
        <begin position="13"/>
        <end position="60"/>
    </location>
</feature>
<feature type="region of interest" description="Interaction with dsRNA" evidence="12 39">
    <location>
        <begin position="200"/>
        <end position="210"/>
    </location>
</feature>
<feature type="binding site" evidence="12 39">
    <location>
        <position position="63"/>
    </location>
    <ligand>
        <name>ATP</name>
        <dbReference type="ChEBI" id="CHEBI:30616"/>
    </ligand>
</feature>
<feature type="binding site" evidence="12 39">
    <location>
        <position position="75"/>
    </location>
    <ligand>
        <name>Mg(2+)</name>
        <dbReference type="ChEBI" id="CHEBI:18420"/>
        <note>catalytic</note>
    </ligand>
</feature>
<feature type="binding site" evidence="12 39">
    <location>
        <position position="77"/>
    </location>
    <ligand>
        <name>Mg(2+)</name>
        <dbReference type="ChEBI" id="CHEBI:18420"/>
        <note>catalytic</note>
    </ligand>
</feature>
<feature type="binding site" evidence="12 39">
    <location>
        <position position="148"/>
    </location>
    <ligand>
        <name>Mg(2+)</name>
        <dbReference type="ChEBI" id="CHEBI:18420"/>
        <note>catalytic</note>
    </ligand>
</feature>
<feature type="binding site" evidence="1">
    <location>
        <position position="210"/>
    </location>
    <ligand>
        <name>ATP</name>
        <dbReference type="ChEBI" id="CHEBI:30616"/>
    </ligand>
</feature>
<feature type="binding site" evidence="12 39">
    <location>
        <position position="213"/>
    </location>
    <ligand>
        <name>ATP</name>
        <dbReference type="ChEBI" id="CHEBI:30616"/>
    </ligand>
</feature>
<feature type="binding site" evidence="12 39">
    <location>
        <position position="229"/>
    </location>
    <ligand>
        <name>ATP</name>
        <dbReference type="ChEBI" id="CHEBI:30616"/>
    </ligand>
</feature>
<feature type="site" description="Interaction with dsRNA" evidence="39">
    <location>
        <position position="158"/>
    </location>
</feature>
<feature type="lipid moiety-binding region" description="S-geranylgeranyl cysteine" evidence="38">
    <location>
        <position position="397"/>
    </location>
</feature>
<feature type="splice variant" id="VSP_003740" description="In isoform p48." evidence="27 28">
    <original>AESNSADDETDDPRRYQKYGYIGTHEYPHFSHRPSTLQAASTPQAEEDWTCTIL</original>
    <variation>TQHTPGSIHPTGRRGLDLHHPLNASASWGKGLQCYLDQFLHFQVGLLIQRGQSSSVSWCIIQDRTQVS</variation>
    <location>
        <begin position="347"/>
        <end position="400"/>
    </location>
</feature>
<feature type="splice variant" id="VSP_003738" description="In isoform p42." evidence="25 26 29 32 33 34 35 36">
    <original>AESNSADDETDDPRRYQK</original>
    <variation>VRPPASSLPFIPAPLHEA</variation>
    <location>
        <begin position="347"/>
        <end position="364"/>
    </location>
</feature>
<feature type="splice variant" id="VSP_060747" description="In isoform p44.">
    <original>AESNSADDETDDPR</original>
    <variation>VNLTLVGRRNYTNN</variation>
    <location>
        <begin position="347"/>
        <end position="360"/>
    </location>
</feature>
<feature type="splice variant" id="VSP_060748" description="In isoform p44.">
    <location>
        <begin position="361"/>
        <end position="400"/>
    </location>
</feature>
<feature type="splice variant" id="VSP_003739" description="In isoform p42." evidence="25 26 29 32 33 34 35 36">
    <location>
        <begin position="365"/>
        <end position="400"/>
    </location>
</feature>
<feature type="sequence variant" id="VAR_060471" description="In dbSNP:rs1050994." evidence="14">
    <original>N</original>
    <variation>D</variation>
    <location>
        <position position="31"/>
    </location>
</feature>
<feature type="sequence variant" id="VAR_087200" description="In IMD100; results in increased 2'-5'-oligoadenylate synthetase activity leading to increased RNase L-mediated cellular RNA degradation, translational arrest and apoptosis." evidence="16 17">
    <original>A</original>
    <variation>V</variation>
    <location>
        <position position="76"/>
    </location>
</feature>
<feature type="sequence variant" id="VAR_087201" description="In IMD100; results in increased 2'-5'-oligoadenylate synthetase activity leading to increased RNase L-mediated cellular RNA degradation, translational arrest and apoptosis." evidence="16 17">
    <original>C</original>
    <variation>Y</variation>
    <location>
        <position position="109"/>
    </location>
</feature>
<feature type="sequence variant" id="VAR_087202" description="In IMD100; results in increased 2'-5'-oligoadenylate synthetase activity leading to increased RNase L-mediated cellular RNA degradation, translational arrest and apoptosis." evidence="17">
    <original>V</original>
    <variation>G</variation>
    <location>
        <position position="121"/>
    </location>
</feature>
<feature type="sequence variant" id="VAR_060472" description="In dbSNP:rs4767022.">
    <original>G</original>
    <variation>R</variation>
    <location>
        <position position="127"/>
    </location>
</feature>
<feature type="sequence variant" id="VAR_034872" description="In dbSNP:rs1131454." evidence="5 6 7 8 14 19 20 22 24">
    <original>G</original>
    <variation>S</variation>
    <location>
        <position position="162"/>
    </location>
</feature>
<feature type="sequence variant" id="VAR_087203" description="In IMD100; results in increased 2'-5'-oligoadenylate synthetase activity leading to increased RNase L-mediated cellular RNA degradation, translational arrest and apoptosis." evidence="16 17">
    <original>L</original>
    <variation>V</variation>
    <location>
        <position position="198"/>
    </location>
</feature>
<feature type="sequence variant" id="VAR_060473" description="In dbSNP:rs1131476." evidence="8 14 23">
    <original>A</original>
    <variation>T</variation>
    <location>
        <position position="352"/>
    </location>
</feature>
<feature type="sequence variant" id="VAR_057658" description="In dbSNP:rs35919998.">
    <original>D</original>
    <variation>G</variation>
    <location>
        <position position="354"/>
    </location>
</feature>
<feature type="sequence variant" id="VAR_057659" description="In dbSNP:rs1051042." evidence="8 14 23">
    <original>R</original>
    <variation>T</variation>
    <location>
        <position position="361"/>
    </location>
</feature>
<feature type="mutagenesis site" description="Decreased enzyme activity." evidence="12">
    <original>K</original>
    <variation>A</variation>
    <location>
        <position position="66"/>
    </location>
</feature>
<feature type="mutagenesis site" description="Loss of activity; when associated with A-77." evidence="3 15">
    <original>D</original>
    <variation>A</variation>
    <location>
        <position position="75"/>
    </location>
</feature>
<feature type="mutagenesis site" description="Loss of activity; when associated with A-75." evidence="3 15">
    <original>D</original>
    <variation>A</variation>
    <location>
        <position position="77"/>
    </location>
</feature>
<feature type="mutagenesis site" description="Strongly reduced enzyme activity." evidence="12">
    <original>D</original>
    <variation>A</variation>
    <location>
        <position position="148"/>
    </location>
</feature>
<feature type="mutagenesis site" description="Loss of enzyme activity." evidence="12">
    <original>E</original>
    <variation>A</variation>
    <location>
        <position position="233"/>
    </location>
</feature>
<feature type="mutagenesis site" description="Loss of activity; when associated with A-332 and A-333." evidence="21">
    <original>C</original>
    <variation>A</variation>
    <location>
        <position position="331"/>
    </location>
</feature>
<feature type="mutagenesis site" description="Loss of activity; when associated with A-331 and A-333." evidence="21">
    <original>F</original>
    <variation>A</variation>
    <location>
        <position position="332"/>
    </location>
</feature>
<feature type="mutagenesis site" description="Loss of activity; when associated with A-331 and A-332." evidence="21">
    <original>K</original>
    <variation>A</variation>
    <location>
        <position position="333"/>
    </location>
</feature>
<feature type="mutagenesis site" description="Not prenylated and diffusely distributed. Loss of antiviral activity." evidence="18">
    <original>C</original>
    <variation>A</variation>
    <location>
        <position position="397"/>
    </location>
</feature>
<feature type="sequence conflict" description="In Ref. 4; AAA39857." evidence="37" ref="4">
    <original>D</original>
    <variation>E</variation>
    <location>
        <position position="18"/>
    </location>
</feature>
<feature type="sequence conflict" description="In Ref. 12; AAH71981." evidence="37" ref="12">
    <original>R</original>
    <variation>S</variation>
    <location>
        <position position="111"/>
    </location>
</feature>
<feature type="sequence conflict" description="In Ref. 1; AAB59552/AAB59553/CAA26633." evidence="37" ref="1">
    <original>F</original>
    <variation>L</variation>
    <location>
        <position position="115"/>
    </location>
</feature>
<feature type="sequence conflict" description="In Ref. 10; BAD96726." evidence="37" ref="10">
    <original>E</original>
    <variation>V</variation>
    <location>
        <position position="120"/>
    </location>
</feature>
<feature type="sequence conflict" description="In Ref. 4; AAA39858." evidence="37" ref="4">
    <original>Q</original>
    <variation>QE</variation>
    <location>
        <position position="122"/>
    </location>
</feature>
<feature type="sequence conflict" description="In Ref. 4; AAA39857." evidence="37" ref="4">
    <original>G</original>
    <variation>D</variation>
    <location>
        <position position="157"/>
    </location>
</feature>
<feature type="sequence conflict" description="In Ref. 4; AAA39858." evidence="37" ref="4">
    <original>E</original>
    <variation>D</variation>
    <location>
        <position position="176"/>
    </location>
</feature>
<feature type="sequence conflict" description="In Ref. 2; CAB51602." evidence="37" ref="2">
    <original>R</original>
    <variation>T</variation>
    <location>
        <position position="295"/>
    </location>
</feature>
<feature type="sequence conflict" description="In Ref. 2; CAB51602." evidence="37" ref="2">
    <original>G</original>
    <variation>R</variation>
    <location>
        <position position="315"/>
    </location>
</feature>
<feature type="turn" evidence="40">
    <location>
        <begin position="4"/>
        <end position="6"/>
    </location>
</feature>
<feature type="helix" evidence="40">
    <location>
        <begin position="9"/>
        <end position="11"/>
    </location>
</feature>
<feature type="helix" evidence="40">
    <location>
        <begin position="12"/>
        <end position="19"/>
    </location>
</feature>
<feature type="helix" evidence="40">
    <location>
        <begin position="24"/>
        <end position="43"/>
    </location>
</feature>
<feature type="turn" evidence="40">
    <location>
        <begin position="44"/>
        <end position="46"/>
    </location>
</feature>
<feature type="strand" evidence="40">
    <location>
        <begin position="55"/>
        <end position="61"/>
    </location>
</feature>
<feature type="helix" evidence="40">
    <location>
        <begin position="62"/>
        <end position="66"/>
    </location>
</feature>
<feature type="turn" evidence="40">
    <location>
        <begin position="71"/>
        <end position="73"/>
    </location>
</feature>
<feature type="strand" evidence="40">
    <location>
        <begin position="76"/>
        <end position="84"/>
    </location>
</feature>
<feature type="helix" evidence="40">
    <location>
        <begin position="88"/>
        <end position="111"/>
    </location>
</feature>
<feature type="turn" evidence="40">
    <location>
        <begin position="112"/>
        <end position="114"/>
    </location>
</feature>
<feature type="strand" evidence="40">
    <location>
        <begin position="116"/>
        <end position="118"/>
    </location>
</feature>
<feature type="strand" evidence="40">
    <location>
        <begin position="132"/>
        <end position="137"/>
    </location>
</feature>
<feature type="turn" evidence="40">
    <location>
        <begin position="139"/>
        <end position="141"/>
    </location>
</feature>
<feature type="strand" evidence="40">
    <location>
        <begin position="145"/>
        <end position="152"/>
    </location>
</feature>
<feature type="strand" evidence="40">
    <location>
        <begin position="161"/>
        <end position="163"/>
    </location>
</feature>
<feature type="helix" evidence="40">
    <location>
        <begin position="167"/>
        <end position="179"/>
    </location>
</feature>
<feature type="turn" evidence="40">
    <location>
        <begin position="183"/>
        <end position="186"/>
    </location>
</feature>
<feature type="helix" evidence="40">
    <location>
        <begin position="187"/>
        <end position="190"/>
    </location>
</feature>
<feature type="helix" evidence="40">
    <location>
        <begin position="191"/>
        <end position="195"/>
    </location>
</feature>
<feature type="turn" evidence="40">
    <location>
        <begin position="196"/>
        <end position="200"/>
    </location>
</feature>
<feature type="helix" evidence="40">
    <location>
        <begin position="203"/>
        <end position="223"/>
    </location>
</feature>
<feature type="helix" evidence="40">
    <location>
        <begin position="229"/>
        <end position="243"/>
    </location>
</feature>
<feature type="helix" evidence="40">
    <location>
        <begin position="251"/>
        <end position="263"/>
    </location>
</feature>
<feature type="helix" evidence="40">
    <location>
        <begin position="265"/>
        <end position="267"/>
    </location>
</feature>
<feature type="strand" evidence="40">
    <location>
        <begin position="278"/>
        <end position="280"/>
    </location>
</feature>
<feature type="helix" evidence="40">
    <location>
        <begin position="281"/>
        <end position="290"/>
    </location>
</feature>
<feature type="strand" evidence="40">
    <location>
        <begin position="293"/>
        <end position="295"/>
    </location>
</feature>
<feature type="strand" evidence="40">
    <location>
        <begin position="297"/>
        <end position="300"/>
    </location>
</feature>
<feature type="strand" evidence="40">
    <location>
        <begin position="303"/>
        <end position="308"/>
    </location>
</feature>
<feature type="helix" evidence="40">
    <location>
        <begin position="313"/>
        <end position="326"/>
    </location>
</feature>
<feature type="helix" evidence="40">
    <location>
        <begin position="330"/>
        <end position="332"/>
    </location>
</feature>
<feature type="sequence conflict" description="In Ref. 4; AAA39858, 6; AAW63050 and 16; CAA26497." evidence="37" ref="4 6 16">
    <original>G</original>
    <variation>R</variation>
    <location sequence="P00973-3">
        <position position="397"/>
    </location>
</feature>
<comment type="function">
    <text evidence="4 9 11 12 17 18">Interferon-induced, dsRNA-activated antiviral enzyme which plays a critical role in cellular innate antiviral response (PubMed:34581622). In addition, it may also play a role in other cellular processes such as apoptosis, cell growth, differentiation and gene regulation. Synthesizes higher oligomers of 2'-5'-oligoadenylates (2-5A) from ATP which then bind to the inactive monomeric form of ribonuclease L (RNase L) leading to its dimerization and subsequent activation. Activation of RNase L leads to degradation of cellular as well as viral RNA, resulting in the inhibition of protein synthesis, thus terminating viral replication (PubMed:34145065, PubMed:34581622). Can mediate the antiviral effect via the classical RNase L-dependent pathway or an alternative antiviral pathway independent of RNase L. The secreted form displays antiviral effect against vesicular stomatitis virus (VSV), herpes simplex virus type 2 (HSV-2), and encephalomyocarditis virus (EMCV) and stimulates the alternative antiviral pathway independent of RNase L.</text>
</comment>
<comment type="function">
    <molecule>Isoform p46</molecule>
    <text evidence="18">When prenylated at C-terminal, acts as a double-stranded RNA (dsRNA) sensor specifically targeted to membranous replicative organelles in SARS coronavirus-2/SARS-CoV-2 infected cells where it binds to dsRNA structures in the SARS-CoV-2 5'-UTR and initiates a potent block to SARS-CoV-2 replication. Recognizes short stretches of dsRNA and activates RNase L. The binding is remarkably specific, with two conserved stem loops in the SARS-CoV-2 5'- untranslated region (UTR) constituting the principal viral target (PubMed:34581622). The same mechanism is necessary to initiate a block to cardiovirus EMCV (PubMed:34581622).</text>
</comment>
<comment type="function">
    <molecule>Isoform p42</molecule>
    <text evidence="18">Not prenylated at C-terminal, is diffusely localized and unable to initiate a detectable block to SARS-CoV-2 replication.</text>
</comment>
<comment type="catalytic activity">
    <reaction evidence="3 4 12 15 19 20 21">
        <text>3 ATP = 5'-triphosphoadenylyl-(2'-&gt;5')-adenylyl-(2'-&gt;5')-adenosine + 2 diphosphate</text>
        <dbReference type="Rhea" id="RHEA:34407"/>
        <dbReference type="ChEBI" id="CHEBI:30616"/>
        <dbReference type="ChEBI" id="CHEBI:33019"/>
        <dbReference type="ChEBI" id="CHEBI:67143"/>
        <dbReference type="EC" id="2.7.7.84"/>
    </reaction>
</comment>
<comment type="cofactor">
    <cofactor evidence="12">
        <name>Mg(2+)</name>
        <dbReference type="ChEBI" id="CHEBI:18420"/>
    </cofactor>
</comment>
<comment type="activity regulation">
    <text evidence="4 12 18">Produced as a latent enzyme which is activated by dsRNA generated during the course of viral infection. The dsRNA activator must be at least 15 nucleotides long, and no modification of the 2'-hydroxyl group is tolerated (PubMed:34581622). ssRNA or dsDNA do not act as activators.</text>
</comment>
<comment type="biophysicochemical properties">
    <kinetics>
        <KM evidence="4">0.31 mM for ATP</KM>
    </kinetics>
</comment>
<comment type="subunit">
    <text evidence="12 21">Monomer (PubMed:9407111). Homotetramer (PubMed:23319625, PubMed:9407111).</text>
</comment>
<comment type="interaction">
    <interactant intactId="EBI-3932815">
        <id>P00973</id>
    </interactant>
    <interactant intactId="EBI-351710">
        <id>P12814</id>
        <label>ACTN1</label>
    </interactant>
    <organismsDiffer>false</organismsDiffer>
    <experiments>4</experiments>
</comment>
<comment type="interaction">
    <interactant intactId="EBI-3932815">
        <id>P00973</id>
    </interactant>
    <interactant intactId="EBI-949824">
        <id>O00471</id>
        <label>EXOC5</label>
    </interactant>
    <organismsDiffer>false</organismsDiffer>
    <experiments>3</experiments>
</comment>
<comment type="interaction">
    <interactant intactId="EBI-3932815">
        <id>P00973</id>
    </interactant>
    <interactant intactId="EBI-912440">
        <id>Q96LA8</id>
        <label>PRMT6</label>
    </interactant>
    <organismsDiffer>false</organismsDiffer>
    <experiments>2</experiments>
</comment>
<comment type="interaction">
    <interactant intactId="EBI-3932815">
        <id>P00973</id>
    </interactant>
    <interactant intactId="EBI-719493">
        <id>P14373</id>
        <label>TRIM27</label>
    </interactant>
    <organismsDiffer>false</organismsDiffer>
    <experiments>5</experiments>
</comment>
<comment type="interaction">
    <interactant intactId="EBI-12081862">
        <id>P00973-2</id>
    </interactant>
    <interactant intactId="EBI-351710">
        <id>P12814</id>
        <label>ACTN1</label>
    </interactant>
    <organismsDiffer>false</organismsDiffer>
    <experiments>3</experiments>
</comment>
<comment type="interaction">
    <interactant intactId="EBI-12081862">
        <id>P00973-2</id>
    </interactant>
    <interactant intactId="EBI-1805814">
        <id>Q96RK4</id>
        <label>BBS4</label>
    </interactant>
    <organismsDiffer>false</organismsDiffer>
    <experiments>5</experiments>
</comment>
<comment type="interaction">
    <interactant intactId="EBI-12081862">
        <id>P00973-2</id>
    </interactant>
    <interactant intactId="EBI-3866319">
        <id>Q9Y2V7</id>
        <label>COG6</label>
    </interactant>
    <organismsDiffer>false</organismsDiffer>
    <experiments>3</experiments>
</comment>
<comment type="interaction">
    <interactant intactId="EBI-12081862">
        <id>P00973-2</id>
    </interactant>
    <interactant intactId="EBI-949824">
        <id>O00471</id>
        <label>EXOC5</label>
    </interactant>
    <organismsDiffer>false</organismsDiffer>
    <experiments>6</experiments>
</comment>
<comment type="interaction">
    <interactant intactId="EBI-12081862">
        <id>P00973-2</id>
    </interactant>
    <interactant intactId="EBI-618309">
        <id>Q08379</id>
        <label>GOLGA2</label>
    </interactant>
    <organismsDiffer>false</organismsDiffer>
    <experiments>3</experiments>
</comment>
<comment type="interaction">
    <interactant intactId="EBI-12081862">
        <id>P00973-2</id>
    </interactant>
    <interactant intactId="EBI-10961706">
        <id>Q96ED9-2</id>
        <label>HOOK2</label>
    </interactant>
    <organismsDiffer>false</organismsDiffer>
    <experiments>3</experiments>
</comment>
<comment type="interaction">
    <interactant intactId="EBI-12081862">
        <id>P00973-2</id>
    </interactant>
    <interactant intactId="EBI-12192715">
        <id>Q96T51-2</id>
        <label>RUFY1</label>
    </interactant>
    <organismsDiffer>false</organismsDiffer>
    <experiments>3</experiments>
</comment>
<comment type="interaction">
    <interactant intactId="EBI-12081862">
        <id>P00973-2</id>
    </interactant>
    <interactant intactId="EBI-719493">
        <id>P14373</id>
        <label>TRIM27</label>
    </interactant>
    <organismsDiffer>false</organismsDiffer>
    <experiments>6</experiments>
</comment>
<comment type="subcellular location">
    <subcellularLocation>
        <location evidence="11 19 20">Cytoplasm</location>
    </subcellularLocation>
    <subcellularLocation>
        <location evidence="11">Mitochondrion</location>
    </subcellularLocation>
    <subcellularLocation>
        <location evidence="11 19">Nucleus</location>
    </subcellularLocation>
    <subcellularLocation>
        <location evidence="11">Microsome</location>
    </subcellularLocation>
    <subcellularLocation>
        <location evidence="11">Endoplasmic reticulum</location>
    </subcellularLocation>
    <subcellularLocation>
        <location evidence="2">Secreted</location>
    </subcellularLocation>
    <text evidence="11">Associated with different subcellular fractions such as mitochondrial, nuclear, and rough/smooth microsomal fractions.</text>
</comment>
<comment type="subcellular location">
    <molecule>Isoform p46</molecule>
    <text evidence="18">(Microbial infection) In SARS coronavirus-2/SARS-CoV-2 infected cells, prenylated form localizes to membranous perinuclear structures reminiscent of the endoplasmic reticulum rich in viral dsRNA which are SARS-CoV-2 replicative organelles.</text>
</comment>
<comment type="subcellular location">
    <molecule>Isoform p42</molecule>
    <text evidence="18">(Microbial infection) In SARS coronavirus-2/SARS-CoV-2 infected cells, since its not prenylated, is diffusely localized and unable to initiate a detectable block to SARS-CoV-2 replication.</text>
</comment>
<comment type="alternative products">
    <event type="alternative splicing"/>
    <isoform>
        <id>P00973-1</id>
        <name evidence="30 31">p46</name>
        <name>46 kDa</name>
        <name>E18</name>
        <sequence type="displayed"/>
    </isoform>
    <isoform>
        <id>P00973-2</id>
        <name evidence="30 31">p42</name>
        <name>41 kDa</name>
        <name>E16</name>
        <name>3-9</name>
        <name>p41</name>
        <sequence type="described" ref="VSP_003738 VSP_003739"/>
    </isoform>
    <isoform>
        <id>P00973-3</id>
        <name>p48</name>
        <name>9-2</name>
        <sequence type="described" ref="VSP_003740"/>
    </isoform>
    <isoform>
        <id>P00973-4</id>
        <name>p44</name>
        <sequence type="described" ref="VSP_060747 VSP_060748"/>
    </isoform>
</comment>
<comment type="tissue specificity">
    <text evidence="18">Expressed in lungs.</text>
</comment>
<comment type="induction">
    <text evidence="10 13 18">By type I interferon (IFN) and viruses.</text>
</comment>
<comment type="PTM">
    <molecule>Isoform p46</molecule>
    <text evidence="38">Prenylated at C-terminal. C-terminal prenylation is necessary to initiate a block to SARS-CoV-2 and is associated with protection from severe COVID-1. The prenylated form is targeted to perinuclear structures rich in viral dsRNA, whereas the non-prenylated form is diffusely localized and unable to initiate a detectable block to SARS-CoV-2 replication (Probable). C-terminal prenylation is also necessary to initiate a block to cardiovirus EMCV (Probable).</text>
</comment>
<comment type="PTM">
    <molecule>Isoform p42</molecule>
    <text evidence="18">Not prenylated at C-terminal. The non-prenylated form is diffusely localized and unable to initiate a detectable block to SARS-CoV-2 replication.</text>
</comment>
<comment type="polymorphism">
    <text evidence="18 30">Polymorphism dbSNP:rs10774671 is associated with protection against severe COVID-19 disease (PubMed:33633408, PubMed:34581622). In humans, the OAS1 protein is expressed as two major forms designated p46 and p42. The longer p46 isoform is generated by alternative splicing to an exon downstream of the terminal exon used by the p42 isoform. Although all human genotypes contain the exon that completes the transcript encoding p46, an intronic SNP (rs10774671) determines OAS1 exon usage. Alleles with a G at this SNP (G alleles) specify expression of the p46 isoform and some p42, whereas alleles with A at this position predominantly encode the p42 isoform and cannot express the p46 isoform (PubMed:34581622). The p42 isoform, which is the most common isoform in humans (~61% of alleles), has no detectable anti-SARS-CoV-2 activity. The p46 isoform has anti-SARS-CoV-2 activity (PubMed:34581622).</text>
</comment>
<comment type="disease" evidence="16 17">
    <disease id="DI-06438">
        <name>Immunodeficiency 100 with pulmonary alveolar proteinosis and hypogammaglobulinemia</name>
        <acronym>IMD100</acronym>
        <description>An autosomal dominant disorder characterized by onset of respiratory insufficiency due to pulmonary alveolar proteinosis in the first months of life. Disease development appears to be influenced or triggered by viral infection. Patients also have hypogammaglobulinemia, leukocytosis, and splenomegaly.</description>
        <dbReference type="MIM" id="618042"/>
    </disease>
    <text>The disease is caused by variants affecting the gene represented in this entry.</text>
</comment>
<comment type="similarity">
    <text evidence="37">Belongs to the 2-5A synthase family.</text>
</comment>
<comment type="caution">
    <text evidence="37">PubMed:1651324 sequence was originally thought to originate from mouse.</text>
</comment>
<comment type="sequence caution" evidence="37">
    <conflict type="erroneous initiation">
        <sequence resource="EMBL-CDS" id="AAA39857"/>
    </conflict>
    <text>Truncated N-terminus.</text>
</comment>
<comment type="sequence caution" evidence="37">
    <conflict type="erroneous initiation">
        <sequence resource="EMBL-CDS" id="AAA39858"/>
    </conflict>
    <text>Truncated N-terminus.</text>
</comment>
<comment type="sequence caution" evidence="37">
    <conflict type="erroneous initiation">
        <sequence resource="EMBL-CDS" id="AAA59955"/>
    </conflict>
    <text>Truncated N-terminus.</text>
</comment>
<comment type="sequence caution" evidence="37">
    <conflict type="erroneous initiation">
        <sequence resource="EMBL-CDS" id="BAD96726"/>
    </conflict>
    <text>Extended N-terminus.</text>
</comment>
<comment type="sequence caution" evidence="37">
    <conflict type="erroneous gene model prediction">
        <sequence resource="EMBL-CDS" id="CAA26497"/>
    </conflict>
</comment>
<comment type="sequence caution" evidence="37">
    <conflict type="erroneous initiation">
        <sequence resource="EMBL-CDS" id="CAA30164"/>
    </conflict>
    <text>Truncated N-terminus.</text>
</comment>
<comment type="sequence caution" evidence="37">
    <conflict type="frameshift">
        <sequence resource="EMBL-CDS" id="CAF33358"/>
    </conflict>
</comment>
<comment type="online information" name="Protein Spotlight">
    <link uri="https://www.proteinspotlight.org/back_issues/246/"/>
    <text>Luck of the draw - Issue 246 of April 2022</text>
</comment>